<protein>
    <recommendedName>
        <fullName evidence="29">Beta-lactamase</fullName>
        <ecNumber evidence="7 19 20 24">3.5.2.6</ecNumber>
    </recommendedName>
    <alternativeName>
        <fullName evidence="29 30">Cephalosporinase</fullName>
        <shortName evidence="30">CSase</shortName>
    </alternativeName>
</protein>
<evidence type="ECO:0000255" key="1">
    <source>
        <dbReference type="PROSITE-ProRule" id="PRU10102"/>
    </source>
</evidence>
<evidence type="ECO:0000269" key="2">
    <source>
    </source>
</evidence>
<evidence type="ECO:0000269" key="3">
    <source>
    </source>
</evidence>
<evidence type="ECO:0000269" key="4">
    <source>
    </source>
</evidence>
<evidence type="ECO:0000269" key="5">
    <source>
    </source>
</evidence>
<evidence type="ECO:0000269" key="6">
    <source>
    </source>
</evidence>
<evidence type="ECO:0000269" key="7">
    <source>
    </source>
</evidence>
<evidence type="ECO:0000269" key="8">
    <source>
    </source>
</evidence>
<evidence type="ECO:0000269" key="9">
    <source>
    </source>
</evidence>
<evidence type="ECO:0000269" key="10">
    <source>
    </source>
</evidence>
<evidence type="ECO:0000269" key="11">
    <source>
    </source>
</evidence>
<evidence type="ECO:0000269" key="12">
    <source>
    </source>
</evidence>
<evidence type="ECO:0000269" key="13">
    <source>
    </source>
</evidence>
<evidence type="ECO:0000269" key="14">
    <source>
    </source>
</evidence>
<evidence type="ECO:0000269" key="15">
    <source>
    </source>
</evidence>
<evidence type="ECO:0000269" key="16">
    <source>
    </source>
</evidence>
<evidence type="ECO:0000269" key="17">
    <source>
    </source>
</evidence>
<evidence type="ECO:0000269" key="18">
    <source>
    </source>
</evidence>
<evidence type="ECO:0000269" key="19">
    <source>
    </source>
</evidence>
<evidence type="ECO:0000269" key="20">
    <source>
    </source>
</evidence>
<evidence type="ECO:0000269" key="21">
    <source>
    </source>
</evidence>
<evidence type="ECO:0000269" key="22">
    <source>
    </source>
</evidence>
<evidence type="ECO:0000269" key="23">
    <source>
    </source>
</evidence>
<evidence type="ECO:0000269" key="24">
    <source>
    </source>
</evidence>
<evidence type="ECO:0000269" key="25">
    <source>
    </source>
</evidence>
<evidence type="ECO:0000269" key="26">
    <source ref="13"/>
</evidence>
<evidence type="ECO:0000303" key="27">
    <source>
    </source>
</evidence>
<evidence type="ECO:0000303" key="28">
    <source>
    </source>
</evidence>
<evidence type="ECO:0000303" key="29">
    <source>
    </source>
</evidence>
<evidence type="ECO:0000303" key="30">
    <source>
    </source>
</evidence>
<evidence type="ECO:0000303" key="31">
    <source>
    </source>
</evidence>
<evidence type="ECO:0000305" key="32"/>
<evidence type="ECO:0000305" key="33">
    <source>
    </source>
</evidence>
<evidence type="ECO:0000312" key="34">
    <source>
        <dbReference type="PDB" id="1L0D"/>
    </source>
</evidence>
<evidence type="ECO:0000312" key="35">
    <source>
        <dbReference type="PDB" id="1L0F"/>
    </source>
</evidence>
<evidence type="ECO:0000312" key="36">
    <source>
        <dbReference type="Proteomes" id="UP000000625"/>
    </source>
</evidence>
<evidence type="ECO:0007744" key="37">
    <source>
        <dbReference type="PDB" id="1C3B"/>
    </source>
</evidence>
<evidence type="ECO:0007744" key="38">
    <source>
        <dbReference type="PDB" id="1FCM"/>
    </source>
</evidence>
<evidence type="ECO:0007744" key="39">
    <source>
        <dbReference type="PDB" id="1FCN"/>
    </source>
</evidence>
<evidence type="ECO:0007744" key="40">
    <source>
        <dbReference type="PDB" id="1FCO"/>
    </source>
</evidence>
<evidence type="ECO:0007744" key="41">
    <source>
        <dbReference type="PDB" id="1FSW"/>
    </source>
</evidence>
<evidence type="ECO:0007744" key="42">
    <source>
        <dbReference type="PDB" id="1FSY"/>
    </source>
</evidence>
<evidence type="ECO:0007744" key="43">
    <source>
        <dbReference type="PDB" id="1GA9"/>
    </source>
</evidence>
<evidence type="ECO:0007744" key="44">
    <source>
        <dbReference type="PDB" id="1I5Q"/>
    </source>
</evidence>
<evidence type="ECO:0007744" key="45">
    <source>
        <dbReference type="PDB" id="1IEL"/>
    </source>
</evidence>
<evidence type="ECO:0007744" key="46">
    <source>
        <dbReference type="PDB" id="1IEM"/>
    </source>
</evidence>
<evidence type="ECO:0007744" key="47">
    <source>
        <dbReference type="PDB" id="1KDS"/>
    </source>
</evidence>
<evidence type="ECO:0007744" key="48">
    <source>
        <dbReference type="PDB" id="1KDW"/>
    </source>
</evidence>
<evidence type="ECO:0007744" key="49">
    <source>
        <dbReference type="PDB" id="1KE0"/>
    </source>
</evidence>
<evidence type="ECO:0007744" key="50">
    <source>
        <dbReference type="PDB" id="1KE3"/>
    </source>
</evidence>
<evidence type="ECO:0007744" key="51">
    <source>
        <dbReference type="PDB" id="1KE4"/>
    </source>
</evidence>
<evidence type="ECO:0007744" key="52">
    <source>
        <dbReference type="PDB" id="1KVL"/>
    </source>
</evidence>
<evidence type="ECO:0007744" key="53">
    <source>
        <dbReference type="PDB" id="1KVM"/>
    </source>
</evidence>
<evidence type="ECO:0007744" key="54">
    <source>
        <dbReference type="PDB" id="1L0E"/>
    </source>
</evidence>
<evidence type="ECO:0007744" key="55">
    <source>
        <dbReference type="PDB" id="1L0G"/>
    </source>
</evidence>
<evidence type="ECO:0007744" key="56">
    <source>
        <dbReference type="PDB" id="1L2S"/>
    </source>
</evidence>
<evidence type="ECO:0007744" key="57">
    <source>
        <dbReference type="PDB" id="1LL5"/>
    </source>
</evidence>
<evidence type="ECO:0007744" key="58">
    <source>
        <dbReference type="PDB" id="1LL9"/>
    </source>
</evidence>
<evidence type="ECO:0007744" key="59">
    <source>
        <dbReference type="PDB" id="1LLB"/>
    </source>
</evidence>
<evidence type="ECO:0007744" key="60">
    <source>
        <dbReference type="PDB" id="1MXO"/>
    </source>
</evidence>
<evidence type="ECO:0007744" key="61">
    <source>
        <dbReference type="PDB" id="1MY8"/>
    </source>
</evidence>
<evidence type="ECO:0007744" key="62">
    <source>
        <dbReference type="PDB" id="1O07"/>
    </source>
</evidence>
<evidence type="ECO:0007744" key="63">
    <source>
        <dbReference type="PDB" id="1PI4"/>
    </source>
</evidence>
<evidence type="ECO:0007744" key="64">
    <source>
        <dbReference type="PDB" id="1PI5"/>
    </source>
</evidence>
<evidence type="ECO:0007744" key="65">
    <source>
        <dbReference type="PDB" id="1XGI"/>
    </source>
</evidence>
<evidence type="ECO:0007744" key="66">
    <source>
        <dbReference type="PDB" id="1XGJ"/>
    </source>
</evidence>
<evidence type="ECO:0007744" key="67">
    <source>
        <dbReference type="PDB" id="2BLS"/>
    </source>
</evidence>
<evidence type="ECO:0007744" key="68">
    <source>
        <dbReference type="PDB" id="2FFY"/>
    </source>
</evidence>
<evidence type="ECO:0007744" key="69">
    <source>
        <dbReference type="PDB" id="2HDQ"/>
    </source>
</evidence>
<evidence type="ECO:0007744" key="70">
    <source>
        <dbReference type="PDB" id="2HDR"/>
    </source>
</evidence>
<evidence type="ECO:0007744" key="71">
    <source>
        <dbReference type="PDB" id="2HDS"/>
    </source>
</evidence>
<evidence type="ECO:0007744" key="72">
    <source>
        <dbReference type="PDB" id="2HDU"/>
    </source>
</evidence>
<evidence type="ECO:0007744" key="73">
    <source>
        <dbReference type="PDB" id="2I72"/>
    </source>
</evidence>
<evidence type="ECO:0007744" key="74">
    <source>
        <dbReference type="PDB" id="2P9V"/>
    </source>
</evidence>
<evidence type="ECO:0007744" key="75">
    <source>
        <dbReference type="PDB" id="2PU2"/>
    </source>
</evidence>
<evidence type="ECO:0007744" key="76">
    <source>
        <dbReference type="PDB" id="2PU4"/>
    </source>
</evidence>
<evidence type="ECO:0007744" key="77">
    <source>
        <dbReference type="PDB" id="2R9W"/>
    </source>
</evidence>
<evidence type="ECO:0007744" key="78">
    <source>
        <dbReference type="PDB" id="2R9X"/>
    </source>
</evidence>
<evidence type="ECO:0007744" key="79">
    <source>
        <dbReference type="PDB" id="2RCX"/>
    </source>
</evidence>
<evidence type="ECO:0007744" key="80">
    <source>
        <dbReference type="PDB" id="3BLS"/>
    </source>
</evidence>
<evidence type="ECO:0007744" key="81">
    <source>
        <dbReference type="PDB" id="3BM6"/>
    </source>
</evidence>
<evidence type="ECO:0007744" key="82">
    <source>
        <dbReference type="PDB" id="3FKV"/>
    </source>
</evidence>
<evidence type="ECO:0007744" key="83">
    <source>
        <dbReference type="PDB" id="3FKW"/>
    </source>
</evidence>
<evidence type="ECO:0007744" key="84">
    <source>
        <dbReference type="PDB" id="3GQZ"/>
    </source>
</evidence>
<evidence type="ECO:0007744" key="85">
    <source>
        <dbReference type="PDB" id="3GR2"/>
    </source>
</evidence>
<evidence type="ECO:0007744" key="86">
    <source>
        <dbReference type="PDB" id="3GRJ"/>
    </source>
</evidence>
<evidence type="ECO:0007744" key="87">
    <source>
        <dbReference type="PDB" id="3GSG"/>
    </source>
</evidence>
<evidence type="ECO:0007744" key="88">
    <source>
        <dbReference type="PDB" id="3GTC"/>
    </source>
</evidence>
<evidence type="ECO:0007744" key="89">
    <source>
        <dbReference type="PDB" id="3GV9"/>
    </source>
</evidence>
<evidence type="ECO:0007744" key="90">
    <source>
        <dbReference type="PDB" id="3GVB"/>
    </source>
</evidence>
<evidence type="ECO:0007744" key="91">
    <source>
        <dbReference type="PDB" id="3IWI"/>
    </source>
</evidence>
<evidence type="ECO:0007744" key="92">
    <source>
        <dbReference type="PDB" id="3IWO"/>
    </source>
</evidence>
<evidence type="ECO:0007744" key="93">
    <source>
        <dbReference type="PDB" id="3IWQ"/>
    </source>
</evidence>
<evidence type="ECO:0007744" key="94">
    <source>
        <dbReference type="PDB" id="3IXB"/>
    </source>
</evidence>
<evidence type="ECO:0007744" key="95">
    <source>
        <dbReference type="PDB" id="3IXD"/>
    </source>
</evidence>
<evidence type="ECO:0007744" key="96">
    <source>
        <dbReference type="PDB" id="3IXG"/>
    </source>
</evidence>
<evidence type="ECO:0007744" key="97">
    <source>
        <dbReference type="PDB" id="3IXH"/>
    </source>
</evidence>
<evidence type="ECO:0007744" key="98">
    <source>
        <dbReference type="PDB" id="3O86"/>
    </source>
</evidence>
<evidence type="ECO:0007744" key="99">
    <source>
        <dbReference type="PDB" id="3O87"/>
    </source>
</evidence>
<evidence type="ECO:0007744" key="100">
    <source>
        <dbReference type="PDB" id="3O88"/>
    </source>
</evidence>
<evidence type="ECO:0007744" key="101">
    <source>
        <dbReference type="PDB" id="4E3I"/>
    </source>
</evidence>
<evidence type="ECO:0007744" key="102">
    <source>
        <dbReference type="PDB" id="4E3J"/>
    </source>
</evidence>
<evidence type="ECO:0007744" key="103">
    <source>
        <dbReference type="PDB" id="4E3K"/>
    </source>
</evidence>
<evidence type="ECO:0007744" key="104">
    <source>
        <dbReference type="PDB" id="4E3L"/>
    </source>
</evidence>
<evidence type="ECO:0007744" key="105">
    <source>
        <dbReference type="PDB" id="4E3M"/>
    </source>
</evidence>
<evidence type="ECO:0007744" key="106">
    <source>
        <dbReference type="PDB" id="4E3N"/>
    </source>
</evidence>
<evidence type="ECO:0007744" key="107">
    <source>
        <dbReference type="PDB" id="4E3O"/>
    </source>
</evidence>
<evidence type="ECO:0007744" key="108">
    <source>
        <dbReference type="PDB" id="4JXG"/>
    </source>
</evidence>
<evidence type="ECO:0007744" key="109">
    <source>
        <dbReference type="PDB" id="4JXS"/>
    </source>
</evidence>
<evidence type="ECO:0007744" key="110">
    <source>
        <dbReference type="PDB" id="4JXV"/>
    </source>
</evidence>
<evidence type="ECO:0007744" key="111">
    <source>
        <dbReference type="PDB" id="4JXW"/>
    </source>
</evidence>
<evidence type="ECO:0007744" key="112">
    <source>
        <dbReference type="PDB" id="4KEN"/>
    </source>
</evidence>
<evidence type="ECO:0007744" key="113">
    <source>
        <dbReference type="PDB" id="4KG2"/>
    </source>
</evidence>
<evidence type="ECO:0007744" key="114">
    <source>
        <dbReference type="PDB" id="4KG5"/>
    </source>
</evidence>
<evidence type="ECO:0007744" key="115">
    <source>
        <dbReference type="PDB" id="4KG6"/>
    </source>
</evidence>
<evidence type="ECO:0007744" key="116">
    <source>
        <dbReference type="PDB" id="4KZ3"/>
    </source>
</evidence>
<evidence type="ECO:0007744" key="117">
    <source>
        <dbReference type="PDB" id="4KZ4"/>
    </source>
</evidence>
<evidence type="ECO:0007744" key="118">
    <source>
        <dbReference type="PDB" id="4KZ5"/>
    </source>
</evidence>
<evidence type="ECO:0007744" key="119">
    <source>
        <dbReference type="PDB" id="4KZ6"/>
    </source>
</evidence>
<evidence type="ECO:0007744" key="120">
    <source>
        <dbReference type="PDB" id="4KZ7"/>
    </source>
</evidence>
<evidence type="ECO:0007744" key="121">
    <source>
        <dbReference type="PDB" id="4KZ8"/>
    </source>
</evidence>
<evidence type="ECO:0007744" key="122">
    <source>
        <dbReference type="PDB" id="4KZ9"/>
    </source>
</evidence>
<evidence type="ECO:0007744" key="123">
    <source>
        <dbReference type="PDB" id="4KZA"/>
    </source>
</evidence>
<evidence type="ECO:0007744" key="124">
    <source>
        <dbReference type="PDB" id="4KZB"/>
    </source>
</evidence>
<evidence type="ECO:0007744" key="125">
    <source>
        <dbReference type="PDB" id="4LV0"/>
    </source>
</evidence>
<evidence type="ECO:0007744" key="126">
    <source>
        <dbReference type="PDB" id="4LV1"/>
    </source>
</evidence>
<evidence type="ECO:0007744" key="127">
    <source>
        <dbReference type="PDB" id="4LV2"/>
    </source>
</evidence>
<evidence type="ECO:0007744" key="128">
    <source>
        <dbReference type="PDB" id="4LV3"/>
    </source>
</evidence>
<evidence type="ECO:0007744" key="129">
    <source>
        <dbReference type="PDB" id="4OKP"/>
    </source>
</evidence>
<evidence type="ECO:0007744" key="130">
    <source>
        <dbReference type="PDB" id="4OLD"/>
    </source>
</evidence>
<evidence type="ECO:0007744" key="131">
    <source>
        <dbReference type="PDB" id="4OLG"/>
    </source>
</evidence>
<evidence type="ECO:0007744" key="132">
    <source>
        <dbReference type="PDB" id="5JOC"/>
    </source>
</evidence>
<evidence type="ECO:0007744" key="133">
    <source>
        <dbReference type="PDB" id="6DPT"/>
    </source>
</evidence>
<evidence type="ECO:0007744" key="134">
    <source>
        <dbReference type="PDB" id="6DPX"/>
    </source>
</evidence>
<evidence type="ECO:0007744" key="135">
    <source>
        <dbReference type="PDB" id="6DPY"/>
    </source>
</evidence>
<evidence type="ECO:0007744" key="136">
    <source>
        <dbReference type="PDB" id="6DPZ"/>
    </source>
</evidence>
<evidence type="ECO:0007744" key="137">
    <source>
        <dbReference type="PDB" id="6T35"/>
    </source>
</evidence>
<evidence type="ECO:0007744" key="138">
    <source>
        <dbReference type="PDB" id="6T3D"/>
    </source>
</evidence>
<evidence type="ECO:0007744" key="139">
    <source>
        <dbReference type="PDB" id="6T5Y"/>
    </source>
</evidence>
<evidence type="ECO:0007744" key="140">
    <source>
        <dbReference type="PDB" id="6T7L"/>
    </source>
</evidence>
<evidence type="ECO:0007744" key="141">
    <source>
        <dbReference type="PDB" id="6TBW"/>
    </source>
</evidence>
<evidence type="ECO:0007744" key="142">
    <source>
        <dbReference type="PDB" id="6TPM"/>
    </source>
</evidence>
<evidence type="ECO:0007744" key="143">
    <source>
        <dbReference type="PDB" id="6WHF"/>
    </source>
</evidence>
<evidence type="ECO:0007744" key="144">
    <source>
        <dbReference type="PDB" id="6X9Y"/>
    </source>
</evidence>
<evidence type="ECO:0007744" key="145">
    <source>
        <dbReference type="PDB" id="6XFS"/>
    </source>
</evidence>
<evidence type="ECO:0007744" key="146">
    <source>
        <dbReference type="PDB" id="6XG1"/>
    </source>
</evidence>
<evidence type="ECO:0007744" key="147">
    <source>
        <dbReference type="PDB" id="6YEN"/>
    </source>
</evidence>
<evidence type="ECO:0007744" key="148">
    <source>
        <dbReference type="PDB" id="6YEO"/>
    </source>
</evidence>
<evidence type="ECO:0007744" key="149">
    <source>
        <dbReference type="PDB" id="6YPD"/>
    </source>
</evidence>
<evidence type="ECO:0007829" key="150">
    <source>
        <dbReference type="PDB" id="2BLS"/>
    </source>
</evidence>
<evidence type="ECO:0007829" key="151">
    <source>
        <dbReference type="PDB" id="2FFY"/>
    </source>
</evidence>
<evidence type="ECO:0007829" key="152">
    <source>
        <dbReference type="PDB" id="3GR2"/>
    </source>
</evidence>
<evidence type="ECO:0007829" key="153">
    <source>
        <dbReference type="PDB" id="3IWI"/>
    </source>
</evidence>
<evidence type="ECO:0007829" key="154">
    <source>
        <dbReference type="PDB" id="4OLD"/>
    </source>
</evidence>
<evidence type="ECO:0007829" key="155">
    <source>
        <dbReference type="PDB" id="6YEO"/>
    </source>
</evidence>
<name>AMPC_ECOLI</name>
<sequence>MFKTTLCALLITASCSTFAAPQQINDIVHRTITPLIEQQKIPGMAVAVIYQGKPYYFTWGYADIAKKQPVTQQTLFELGSVSKTFTGVLGGDAIARGEIKLSDPTTKYWPELTAKQWNGITLLHLATYTAGGLPLQVPDEVKSSSDLLRFYQNWQPAWAPGTQRLYANSSIGLFGALAVKPSGLSFEQAMQTRVFQPLKLNHTWINVPPAEEKNYAWGYREGKAVHVSPGALDAEAYGVKSTIEDMARWVQSNLKPLDINEKTLQQGIQLAQSRYWQTGDMYQGLGWEMLDWPVNPDSIINGSDNKIALAARPVKAITPPTPAVRASWVHKTGATGGFGSYVAFIPEKELGIVMLANKNYPNPARVDAAWQILNALQ</sequence>
<organism evidence="36">
    <name type="scientific">Escherichia coli (strain K12)</name>
    <dbReference type="NCBI Taxonomy" id="83333"/>
    <lineage>
        <taxon>Bacteria</taxon>
        <taxon>Pseudomonadati</taxon>
        <taxon>Pseudomonadota</taxon>
        <taxon>Gammaproteobacteria</taxon>
        <taxon>Enterobacterales</taxon>
        <taxon>Enterobacteriaceae</taxon>
        <taxon>Escherichia</taxon>
    </lineage>
</organism>
<dbReference type="EC" id="3.5.2.6" evidence="7 19 20 24"/>
<dbReference type="EMBL" id="J01611">
    <property type="protein sequence ID" value="AAA23441.1"/>
    <property type="molecule type" value="Genomic_DNA"/>
</dbReference>
<dbReference type="EMBL" id="U14003">
    <property type="protein sequence ID" value="AAA97049.1"/>
    <property type="molecule type" value="Genomic_DNA"/>
</dbReference>
<dbReference type="EMBL" id="U00096">
    <property type="protein sequence ID" value="AAC77110.1"/>
    <property type="molecule type" value="Genomic_DNA"/>
</dbReference>
<dbReference type="EMBL" id="AP009048">
    <property type="protein sequence ID" value="BAE78154.1"/>
    <property type="molecule type" value="Genomic_DNA"/>
</dbReference>
<dbReference type="EMBL" id="V00277">
    <property type="protein sequence ID" value="CAA23537.1"/>
    <property type="molecule type" value="Genomic_DNA"/>
</dbReference>
<dbReference type="PIR" id="A01007">
    <property type="entry name" value="QKEC"/>
</dbReference>
<dbReference type="RefSeq" id="NP_418574.1">
    <property type="nucleotide sequence ID" value="NC_000913.3"/>
</dbReference>
<dbReference type="RefSeq" id="WP_001336292.1">
    <property type="nucleotide sequence ID" value="NZ_LN832404.1"/>
</dbReference>
<dbReference type="PDB" id="1C3B">
    <property type="method" value="X-ray"/>
    <property type="resolution" value="2.25 A"/>
    <property type="chains" value="A/B=20-377"/>
</dbReference>
<dbReference type="PDB" id="1FCM">
    <property type="method" value="X-ray"/>
    <property type="resolution" value="2.46 A"/>
    <property type="chains" value="A/B=20-377"/>
</dbReference>
<dbReference type="PDB" id="1FCN">
    <property type="method" value="X-ray"/>
    <property type="resolution" value="2.35 A"/>
    <property type="chains" value="A/B=20-377"/>
</dbReference>
<dbReference type="PDB" id="1FCO">
    <property type="method" value="X-ray"/>
    <property type="resolution" value="2.20 A"/>
    <property type="chains" value="A/B=20-377"/>
</dbReference>
<dbReference type="PDB" id="1FSW">
    <property type="method" value="X-ray"/>
    <property type="resolution" value="1.90 A"/>
    <property type="chains" value="A/B=20-376"/>
</dbReference>
<dbReference type="PDB" id="1FSY">
    <property type="method" value="X-ray"/>
    <property type="resolution" value="1.75 A"/>
    <property type="chains" value="A/B=20-376"/>
</dbReference>
<dbReference type="PDB" id="1GA9">
    <property type="method" value="X-ray"/>
    <property type="resolution" value="2.10 A"/>
    <property type="chains" value="A/B=20-377"/>
</dbReference>
<dbReference type="PDB" id="1I5Q">
    <property type="method" value="X-ray"/>
    <property type="resolution" value="1.83 A"/>
    <property type="chains" value="A/B=20-377"/>
</dbReference>
<dbReference type="PDB" id="1IEL">
    <property type="method" value="X-ray"/>
    <property type="resolution" value="2.00 A"/>
    <property type="chains" value="A/B=20-377"/>
</dbReference>
<dbReference type="PDB" id="1IEM">
    <property type="method" value="X-ray"/>
    <property type="resolution" value="2.30 A"/>
    <property type="chains" value="A/B=20-377"/>
</dbReference>
<dbReference type="PDB" id="1KDS">
    <property type="method" value="X-ray"/>
    <property type="resolution" value="2.15 A"/>
    <property type="chains" value="A/B=20-377"/>
</dbReference>
<dbReference type="PDB" id="1KDW">
    <property type="method" value="X-ray"/>
    <property type="resolution" value="2.28 A"/>
    <property type="chains" value="A/B=20-377"/>
</dbReference>
<dbReference type="PDB" id="1KE0">
    <property type="method" value="X-ray"/>
    <property type="resolution" value="2.30 A"/>
    <property type="chains" value="A/B=20-377"/>
</dbReference>
<dbReference type="PDB" id="1KE3">
    <property type="method" value="X-ray"/>
    <property type="resolution" value="2.15 A"/>
    <property type="chains" value="A/B=20-377"/>
</dbReference>
<dbReference type="PDB" id="1KE4">
    <property type="method" value="X-ray"/>
    <property type="resolution" value="1.72 A"/>
    <property type="chains" value="A/B=20-377"/>
</dbReference>
<dbReference type="PDB" id="1KVL">
    <property type="method" value="X-ray"/>
    <property type="resolution" value="1.53 A"/>
    <property type="chains" value="A/B=20-377"/>
</dbReference>
<dbReference type="PDB" id="1KVM">
    <property type="method" value="X-ray"/>
    <property type="resolution" value="2.06 A"/>
    <property type="chains" value="A/B=20-377"/>
</dbReference>
<dbReference type="PDB" id="1L0D">
    <property type="method" value="X-ray"/>
    <property type="resolution" value="1.53 A"/>
    <property type="chains" value="A/B=20-377"/>
</dbReference>
<dbReference type="PDB" id="1L0E">
    <property type="method" value="X-ray"/>
    <property type="resolution" value="1.90 A"/>
    <property type="chains" value="A/B=20-377"/>
</dbReference>
<dbReference type="PDB" id="1L0F">
    <property type="method" value="X-ray"/>
    <property type="resolution" value="1.66 A"/>
    <property type="chains" value="A/B=20-377"/>
</dbReference>
<dbReference type="PDB" id="1L0G">
    <property type="method" value="X-ray"/>
    <property type="resolution" value="1.50 A"/>
    <property type="chains" value="A/B=20-377"/>
</dbReference>
<dbReference type="PDB" id="1L2S">
    <property type="method" value="X-ray"/>
    <property type="resolution" value="1.94 A"/>
    <property type="chains" value="A/B=20-377"/>
</dbReference>
<dbReference type="PDB" id="1LL5">
    <property type="method" value="X-ray"/>
    <property type="resolution" value="1.80 A"/>
    <property type="chains" value="A/B=20-377"/>
</dbReference>
<dbReference type="PDB" id="1LL9">
    <property type="method" value="X-ray"/>
    <property type="resolution" value="1.87 A"/>
    <property type="chains" value="A/B=20-377"/>
</dbReference>
<dbReference type="PDB" id="1LLB">
    <property type="method" value="X-ray"/>
    <property type="resolution" value="1.72 A"/>
    <property type="chains" value="A/B=20-377"/>
</dbReference>
<dbReference type="PDB" id="1MXO">
    <property type="method" value="X-ray"/>
    <property type="resolution" value="1.83 A"/>
    <property type="chains" value="A/B=20-377"/>
</dbReference>
<dbReference type="PDB" id="1MY8">
    <property type="method" value="X-ray"/>
    <property type="resolution" value="1.72 A"/>
    <property type="chains" value="A/B=20-377"/>
</dbReference>
<dbReference type="PDB" id="1O07">
    <property type="method" value="X-ray"/>
    <property type="resolution" value="1.71 A"/>
    <property type="chains" value="A/B=20-377"/>
</dbReference>
<dbReference type="PDB" id="1PI4">
    <property type="method" value="X-ray"/>
    <property type="resolution" value="1.39 A"/>
    <property type="chains" value="A/B=20-377"/>
</dbReference>
<dbReference type="PDB" id="1PI5">
    <property type="method" value="X-ray"/>
    <property type="resolution" value="1.49 A"/>
    <property type="chains" value="A/B=20-377"/>
</dbReference>
<dbReference type="PDB" id="1XGI">
    <property type="method" value="X-ray"/>
    <property type="resolution" value="1.96 A"/>
    <property type="chains" value="A/B=20-377"/>
</dbReference>
<dbReference type="PDB" id="1XGJ">
    <property type="method" value="X-ray"/>
    <property type="resolution" value="1.97 A"/>
    <property type="chains" value="A/B=20-377"/>
</dbReference>
<dbReference type="PDB" id="2BLS">
    <property type="method" value="X-ray"/>
    <property type="resolution" value="2.00 A"/>
    <property type="chains" value="A/B=20-377"/>
</dbReference>
<dbReference type="PDB" id="2FFY">
    <property type="method" value="X-ray"/>
    <property type="resolution" value="1.07 A"/>
    <property type="chains" value="A/B=20-377"/>
</dbReference>
<dbReference type="PDB" id="2HDQ">
    <property type="method" value="X-ray"/>
    <property type="resolution" value="2.10 A"/>
    <property type="chains" value="A/B=20-377"/>
</dbReference>
<dbReference type="PDB" id="2HDR">
    <property type="method" value="X-ray"/>
    <property type="resolution" value="2.20 A"/>
    <property type="chains" value="A/B=20-377"/>
</dbReference>
<dbReference type="PDB" id="2HDS">
    <property type="method" value="X-ray"/>
    <property type="resolution" value="1.16 A"/>
    <property type="chains" value="A/B=20-377"/>
</dbReference>
<dbReference type="PDB" id="2HDU">
    <property type="method" value="X-ray"/>
    <property type="resolution" value="1.49 A"/>
    <property type="chains" value="A/B=20-377"/>
</dbReference>
<dbReference type="PDB" id="2I72">
    <property type="method" value="X-ray"/>
    <property type="resolution" value="2.20 A"/>
    <property type="chains" value="A/B=20-377"/>
</dbReference>
<dbReference type="PDB" id="2P9V">
    <property type="method" value="X-ray"/>
    <property type="resolution" value="1.80 A"/>
    <property type="chains" value="A/B=20-377"/>
</dbReference>
<dbReference type="PDB" id="2PU2">
    <property type="method" value="X-ray"/>
    <property type="resolution" value="1.86 A"/>
    <property type="chains" value="A/B=20-377"/>
</dbReference>
<dbReference type="PDB" id="2PU4">
    <property type="method" value="X-ray"/>
    <property type="resolution" value="2.00 A"/>
    <property type="chains" value="A/B=20-377"/>
</dbReference>
<dbReference type="PDB" id="2R9W">
    <property type="method" value="X-ray"/>
    <property type="resolution" value="1.80 A"/>
    <property type="chains" value="A/B=20-377"/>
</dbReference>
<dbReference type="PDB" id="2R9X">
    <property type="method" value="X-ray"/>
    <property type="resolution" value="1.90 A"/>
    <property type="chains" value="A/B=20-377"/>
</dbReference>
<dbReference type="PDB" id="2RCX">
    <property type="method" value="X-ray"/>
    <property type="resolution" value="2.00 A"/>
    <property type="chains" value="A/B=20-377"/>
</dbReference>
<dbReference type="PDB" id="3BLS">
    <property type="method" value="X-ray"/>
    <property type="resolution" value="2.30 A"/>
    <property type="chains" value="A/B=20-377"/>
</dbReference>
<dbReference type="PDB" id="3BM6">
    <property type="method" value="X-ray"/>
    <property type="resolution" value="2.10 A"/>
    <property type="chains" value="A/B=20-377"/>
</dbReference>
<dbReference type="PDB" id="3FKV">
    <property type="method" value="X-ray"/>
    <property type="resolution" value="1.85 A"/>
    <property type="chains" value="A/B=20-377"/>
</dbReference>
<dbReference type="PDB" id="3FKW">
    <property type="method" value="X-ray"/>
    <property type="resolution" value="1.50 A"/>
    <property type="chains" value="A/B=20-377"/>
</dbReference>
<dbReference type="PDB" id="3GQZ">
    <property type="method" value="X-ray"/>
    <property type="resolution" value="1.80 A"/>
    <property type="chains" value="A/B=20-377"/>
</dbReference>
<dbReference type="PDB" id="3GR2">
    <property type="method" value="X-ray"/>
    <property type="resolution" value="1.80 A"/>
    <property type="chains" value="A/B=20-377"/>
</dbReference>
<dbReference type="PDB" id="3GRJ">
    <property type="method" value="X-ray"/>
    <property type="resolution" value="2.49 A"/>
    <property type="chains" value="A/B=20-377"/>
</dbReference>
<dbReference type="PDB" id="3GSG">
    <property type="method" value="X-ray"/>
    <property type="resolution" value="2.10 A"/>
    <property type="chains" value="A/B=20-377"/>
</dbReference>
<dbReference type="PDB" id="3GTC">
    <property type="method" value="X-ray"/>
    <property type="resolution" value="1.90 A"/>
    <property type="chains" value="A/B=20-377"/>
</dbReference>
<dbReference type="PDB" id="3GV9">
    <property type="method" value="X-ray"/>
    <property type="resolution" value="1.80 A"/>
    <property type="chains" value="A/B=20-377"/>
</dbReference>
<dbReference type="PDB" id="3GVB">
    <property type="method" value="X-ray"/>
    <property type="resolution" value="1.80 A"/>
    <property type="chains" value="A/B=20-377"/>
</dbReference>
<dbReference type="PDB" id="3IWI">
    <property type="method" value="X-ray"/>
    <property type="resolution" value="1.64 A"/>
    <property type="chains" value="A/B=20-377"/>
</dbReference>
<dbReference type="PDB" id="3IWO">
    <property type="method" value="X-ray"/>
    <property type="resolution" value="1.90 A"/>
    <property type="chains" value="A/B=20-377"/>
</dbReference>
<dbReference type="PDB" id="3IWQ">
    <property type="method" value="X-ray"/>
    <property type="resolution" value="1.84 A"/>
    <property type="chains" value="A/B=20-377"/>
</dbReference>
<dbReference type="PDB" id="3IXB">
    <property type="method" value="X-ray"/>
    <property type="resolution" value="1.63 A"/>
    <property type="chains" value="A/B=20-377"/>
</dbReference>
<dbReference type="PDB" id="3IXD">
    <property type="method" value="X-ray"/>
    <property type="resolution" value="2.64 A"/>
    <property type="chains" value="A/B=20-377"/>
</dbReference>
<dbReference type="PDB" id="3IXG">
    <property type="method" value="X-ray"/>
    <property type="resolution" value="2.14 A"/>
    <property type="chains" value="A/B=20-377"/>
</dbReference>
<dbReference type="PDB" id="3IXH">
    <property type="method" value="X-ray"/>
    <property type="resolution" value="2.30 A"/>
    <property type="chains" value="A/B=20-377"/>
</dbReference>
<dbReference type="PDB" id="3O86">
    <property type="method" value="X-ray"/>
    <property type="resolution" value="1.60 A"/>
    <property type="chains" value="A/B=20-377"/>
</dbReference>
<dbReference type="PDB" id="3O87">
    <property type="method" value="X-ray"/>
    <property type="resolution" value="1.78 A"/>
    <property type="chains" value="A/B=20-377"/>
</dbReference>
<dbReference type="PDB" id="3O88">
    <property type="method" value="X-ray"/>
    <property type="resolution" value="1.64 A"/>
    <property type="chains" value="A/B=20-377"/>
</dbReference>
<dbReference type="PDB" id="4E3I">
    <property type="method" value="X-ray"/>
    <property type="resolution" value="1.60 A"/>
    <property type="chains" value="A/B=20-377"/>
</dbReference>
<dbReference type="PDB" id="4E3J">
    <property type="method" value="X-ray"/>
    <property type="resolution" value="1.80 A"/>
    <property type="chains" value="A/B=20-377"/>
</dbReference>
<dbReference type="PDB" id="4E3K">
    <property type="method" value="X-ray"/>
    <property type="resolution" value="1.43 A"/>
    <property type="chains" value="A/B=20-377"/>
</dbReference>
<dbReference type="PDB" id="4E3L">
    <property type="method" value="X-ray"/>
    <property type="resolution" value="1.43 A"/>
    <property type="chains" value="A/B=20-377"/>
</dbReference>
<dbReference type="PDB" id="4E3M">
    <property type="method" value="X-ray"/>
    <property type="resolution" value="1.44 A"/>
    <property type="chains" value="A/B=20-377"/>
</dbReference>
<dbReference type="PDB" id="4E3N">
    <property type="method" value="X-ray"/>
    <property type="resolution" value="1.49 A"/>
    <property type="chains" value="A/B=20-377"/>
</dbReference>
<dbReference type="PDB" id="4E3O">
    <property type="method" value="X-ray"/>
    <property type="resolution" value="1.60 A"/>
    <property type="chains" value="A/B=20-377"/>
</dbReference>
<dbReference type="PDB" id="4JXG">
    <property type="method" value="X-ray"/>
    <property type="resolution" value="1.65 A"/>
    <property type="chains" value="A/B=20-377"/>
</dbReference>
<dbReference type="PDB" id="4JXS">
    <property type="method" value="X-ray"/>
    <property type="resolution" value="1.90 A"/>
    <property type="chains" value="A/B=20-377"/>
</dbReference>
<dbReference type="PDB" id="4JXV">
    <property type="method" value="X-ray"/>
    <property type="resolution" value="1.76 A"/>
    <property type="chains" value="A/B=20-377"/>
</dbReference>
<dbReference type="PDB" id="4JXW">
    <property type="method" value="X-ray"/>
    <property type="resolution" value="2.30 A"/>
    <property type="chains" value="A/B=20-377"/>
</dbReference>
<dbReference type="PDB" id="4KEN">
    <property type="method" value="X-ray"/>
    <property type="resolution" value="1.89 A"/>
    <property type="chains" value="B=20-377"/>
</dbReference>
<dbReference type="PDB" id="4KG2">
    <property type="method" value="X-ray"/>
    <property type="resolution" value="1.89 A"/>
    <property type="chains" value="A/B=20-377"/>
</dbReference>
<dbReference type="PDB" id="4KG5">
    <property type="method" value="X-ray"/>
    <property type="resolution" value="2.11 A"/>
    <property type="chains" value="A/B/C/D=20-377"/>
</dbReference>
<dbReference type="PDB" id="4KG6">
    <property type="method" value="X-ray"/>
    <property type="resolution" value="1.75 A"/>
    <property type="chains" value="A/B/C/D=20-377"/>
</dbReference>
<dbReference type="PDB" id="4KZ3">
    <property type="method" value="X-ray"/>
    <property type="resolution" value="1.67 A"/>
    <property type="chains" value="A/B=20-377"/>
</dbReference>
<dbReference type="PDB" id="4KZ4">
    <property type="method" value="X-ray"/>
    <property type="resolution" value="1.42 A"/>
    <property type="chains" value="A/B=20-377"/>
</dbReference>
<dbReference type="PDB" id="4KZ5">
    <property type="method" value="X-ray"/>
    <property type="resolution" value="1.35 A"/>
    <property type="chains" value="A/B=20-377"/>
</dbReference>
<dbReference type="PDB" id="4KZ6">
    <property type="method" value="X-ray"/>
    <property type="resolution" value="1.68 A"/>
    <property type="chains" value="A/B=20-377"/>
</dbReference>
<dbReference type="PDB" id="4KZ7">
    <property type="method" value="X-ray"/>
    <property type="resolution" value="1.43 A"/>
    <property type="chains" value="A/B=20-377"/>
</dbReference>
<dbReference type="PDB" id="4KZ8">
    <property type="method" value="X-ray"/>
    <property type="resolution" value="2.28 A"/>
    <property type="chains" value="A/B=20-377"/>
</dbReference>
<dbReference type="PDB" id="4KZ9">
    <property type="method" value="X-ray"/>
    <property type="resolution" value="1.72 A"/>
    <property type="chains" value="A/B=20-377"/>
</dbReference>
<dbReference type="PDB" id="4KZA">
    <property type="method" value="X-ray"/>
    <property type="resolution" value="1.60 A"/>
    <property type="chains" value="A/B=20-377"/>
</dbReference>
<dbReference type="PDB" id="4KZB">
    <property type="method" value="X-ray"/>
    <property type="resolution" value="1.37 A"/>
    <property type="chains" value="A/B=20-377"/>
</dbReference>
<dbReference type="PDB" id="4LV0">
    <property type="method" value="X-ray"/>
    <property type="resolution" value="1.65 A"/>
    <property type="chains" value="A/B=20-377"/>
</dbReference>
<dbReference type="PDB" id="4LV1">
    <property type="method" value="X-ray"/>
    <property type="resolution" value="1.74 A"/>
    <property type="chains" value="A/B=20-377"/>
</dbReference>
<dbReference type="PDB" id="4LV2">
    <property type="method" value="X-ray"/>
    <property type="resolution" value="1.65 A"/>
    <property type="chains" value="A/B=20-377"/>
</dbReference>
<dbReference type="PDB" id="4LV3">
    <property type="method" value="X-ray"/>
    <property type="resolution" value="1.42 A"/>
    <property type="chains" value="A/B=20-377"/>
</dbReference>
<dbReference type="PDB" id="4OKP">
    <property type="method" value="X-ray"/>
    <property type="resolution" value="1.37 A"/>
    <property type="chains" value="A/B=20-377"/>
</dbReference>
<dbReference type="PDB" id="4OLD">
    <property type="method" value="X-ray"/>
    <property type="resolution" value="1.48 A"/>
    <property type="chains" value="A/B=20-377"/>
</dbReference>
<dbReference type="PDB" id="4OLG">
    <property type="method" value="X-ray"/>
    <property type="resolution" value="1.71 A"/>
    <property type="chains" value="A/B=20-377"/>
</dbReference>
<dbReference type="PDB" id="5JOC">
    <property type="method" value="X-ray"/>
    <property type="resolution" value="1.75 A"/>
    <property type="chains" value="A/B=21-377"/>
</dbReference>
<dbReference type="PDB" id="6DPT">
    <property type="method" value="X-ray"/>
    <property type="resolution" value="1.79 A"/>
    <property type="chains" value="A/B=20-377"/>
</dbReference>
<dbReference type="PDB" id="6DPX">
    <property type="method" value="X-ray"/>
    <property type="resolution" value="1.90 A"/>
    <property type="chains" value="A/B=20-377"/>
</dbReference>
<dbReference type="PDB" id="6DPY">
    <property type="method" value="X-ray"/>
    <property type="resolution" value="1.91 A"/>
    <property type="chains" value="A/B=20-377"/>
</dbReference>
<dbReference type="PDB" id="6DPZ">
    <property type="method" value="X-ray"/>
    <property type="resolution" value="1.50 A"/>
    <property type="chains" value="A/B=20-377"/>
</dbReference>
<dbReference type="PDB" id="6T35">
    <property type="method" value="X-ray"/>
    <property type="resolution" value="1.75 A"/>
    <property type="chains" value="A=20-377"/>
</dbReference>
<dbReference type="PDB" id="6T3D">
    <property type="method" value="X-ray"/>
    <property type="resolution" value="1.50 A"/>
    <property type="chains" value="A=20-377"/>
</dbReference>
<dbReference type="PDB" id="6T5Y">
    <property type="method" value="X-ray"/>
    <property type="resolution" value="1.30 A"/>
    <property type="chains" value="A=20-377"/>
</dbReference>
<dbReference type="PDB" id="6T7L">
    <property type="method" value="X-ray"/>
    <property type="resolution" value="1.47 A"/>
    <property type="chains" value="A=20-377"/>
</dbReference>
<dbReference type="PDB" id="6TBW">
    <property type="method" value="X-ray"/>
    <property type="resolution" value="1.51 A"/>
    <property type="chains" value="A=20-377"/>
</dbReference>
<dbReference type="PDB" id="6TPM">
    <property type="method" value="X-ray"/>
    <property type="resolution" value="1.72 A"/>
    <property type="chains" value="A=20-377"/>
</dbReference>
<dbReference type="PDB" id="6WHF">
    <property type="method" value="X-ray"/>
    <property type="resolution" value="1.40 A"/>
    <property type="chains" value="A/B=19-377"/>
</dbReference>
<dbReference type="PDB" id="6X9Y">
    <property type="method" value="X-ray"/>
    <property type="resolution" value="1.90 A"/>
    <property type="chains" value="A/B=20-377"/>
</dbReference>
<dbReference type="PDB" id="6XFS">
    <property type="method" value="X-ray"/>
    <property type="resolution" value="2.70 A"/>
    <property type="chains" value="A/B/C/D=19-377"/>
</dbReference>
<dbReference type="PDB" id="6XG1">
    <property type="method" value="X-ray"/>
    <property type="resolution" value="1.22 A"/>
    <property type="chains" value="A/B=19-377"/>
</dbReference>
<dbReference type="PDB" id="6YEN">
    <property type="method" value="X-ray"/>
    <property type="resolution" value="1.42 A"/>
    <property type="chains" value="A=20-377"/>
</dbReference>
<dbReference type="PDB" id="6YEO">
    <property type="method" value="X-ray"/>
    <property type="resolution" value="2.04 A"/>
    <property type="chains" value="A/B/C/D=20-377"/>
</dbReference>
<dbReference type="PDB" id="6YPD">
    <property type="method" value="X-ray"/>
    <property type="resolution" value="1.60 A"/>
    <property type="chains" value="A=20-377"/>
</dbReference>
<dbReference type="PDB" id="9C6P">
    <property type="method" value="X-ray"/>
    <property type="resolution" value="1.66 A"/>
    <property type="chains" value="A/B=1-377"/>
</dbReference>
<dbReference type="PDB" id="9C81">
    <property type="method" value="X-ray"/>
    <property type="resolution" value="1.70 A"/>
    <property type="chains" value="A/B=1-377"/>
</dbReference>
<dbReference type="PDB" id="9C83">
    <property type="method" value="X-ray"/>
    <property type="resolution" value="2.90 A"/>
    <property type="chains" value="A/B=1-377"/>
</dbReference>
<dbReference type="PDB" id="9C84">
    <property type="method" value="X-ray"/>
    <property type="resolution" value="1.70 A"/>
    <property type="chains" value="A/B=1-377"/>
</dbReference>
<dbReference type="PDB" id="9DHL">
    <property type="method" value="X-ray"/>
    <property type="resolution" value="1.88 A"/>
    <property type="chains" value="A/B=1-377"/>
</dbReference>
<dbReference type="PDBsum" id="1C3B"/>
<dbReference type="PDBsum" id="1FCM"/>
<dbReference type="PDBsum" id="1FCN"/>
<dbReference type="PDBsum" id="1FCO"/>
<dbReference type="PDBsum" id="1FSW"/>
<dbReference type="PDBsum" id="1FSY"/>
<dbReference type="PDBsum" id="1GA9"/>
<dbReference type="PDBsum" id="1I5Q"/>
<dbReference type="PDBsum" id="1IEL"/>
<dbReference type="PDBsum" id="1IEM"/>
<dbReference type="PDBsum" id="1KDS"/>
<dbReference type="PDBsum" id="1KDW"/>
<dbReference type="PDBsum" id="1KE0"/>
<dbReference type="PDBsum" id="1KE3"/>
<dbReference type="PDBsum" id="1KE4"/>
<dbReference type="PDBsum" id="1KVL"/>
<dbReference type="PDBsum" id="1KVM"/>
<dbReference type="PDBsum" id="1L0D"/>
<dbReference type="PDBsum" id="1L0E"/>
<dbReference type="PDBsum" id="1L0F"/>
<dbReference type="PDBsum" id="1L0G"/>
<dbReference type="PDBsum" id="1L2S"/>
<dbReference type="PDBsum" id="1LL5"/>
<dbReference type="PDBsum" id="1LL9"/>
<dbReference type="PDBsum" id="1LLB"/>
<dbReference type="PDBsum" id="1MXO"/>
<dbReference type="PDBsum" id="1MY8"/>
<dbReference type="PDBsum" id="1O07"/>
<dbReference type="PDBsum" id="1PI4"/>
<dbReference type="PDBsum" id="1PI5"/>
<dbReference type="PDBsum" id="1XGI"/>
<dbReference type="PDBsum" id="1XGJ"/>
<dbReference type="PDBsum" id="2BLS"/>
<dbReference type="PDBsum" id="2FFY"/>
<dbReference type="PDBsum" id="2HDQ"/>
<dbReference type="PDBsum" id="2HDR"/>
<dbReference type="PDBsum" id="2HDS"/>
<dbReference type="PDBsum" id="2HDU"/>
<dbReference type="PDBsum" id="2I72"/>
<dbReference type="PDBsum" id="2P9V"/>
<dbReference type="PDBsum" id="2PU2"/>
<dbReference type="PDBsum" id="2PU4"/>
<dbReference type="PDBsum" id="2R9W"/>
<dbReference type="PDBsum" id="2R9X"/>
<dbReference type="PDBsum" id="2RCX"/>
<dbReference type="PDBsum" id="3BLS"/>
<dbReference type="PDBsum" id="3BM6"/>
<dbReference type="PDBsum" id="3FKV"/>
<dbReference type="PDBsum" id="3FKW"/>
<dbReference type="PDBsum" id="3GQZ"/>
<dbReference type="PDBsum" id="3GR2"/>
<dbReference type="PDBsum" id="3GRJ"/>
<dbReference type="PDBsum" id="3GSG"/>
<dbReference type="PDBsum" id="3GTC"/>
<dbReference type="PDBsum" id="3GV9"/>
<dbReference type="PDBsum" id="3GVB"/>
<dbReference type="PDBsum" id="3IWI"/>
<dbReference type="PDBsum" id="3IWO"/>
<dbReference type="PDBsum" id="3IWQ"/>
<dbReference type="PDBsum" id="3IXB"/>
<dbReference type="PDBsum" id="3IXD"/>
<dbReference type="PDBsum" id="3IXG"/>
<dbReference type="PDBsum" id="3IXH"/>
<dbReference type="PDBsum" id="3O86"/>
<dbReference type="PDBsum" id="3O87"/>
<dbReference type="PDBsum" id="3O88"/>
<dbReference type="PDBsum" id="4E3I"/>
<dbReference type="PDBsum" id="4E3J"/>
<dbReference type="PDBsum" id="4E3K"/>
<dbReference type="PDBsum" id="4E3L"/>
<dbReference type="PDBsum" id="4E3M"/>
<dbReference type="PDBsum" id="4E3N"/>
<dbReference type="PDBsum" id="4E3O"/>
<dbReference type="PDBsum" id="4JXG"/>
<dbReference type="PDBsum" id="4JXS"/>
<dbReference type="PDBsum" id="4JXV"/>
<dbReference type="PDBsum" id="4JXW"/>
<dbReference type="PDBsum" id="4KEN"/>
<dbReference type="PDBsum" id="4KG2"/>
<dbReference type="PDBsum" id="4KG5"/>
<dbReference type="PDBsum" id="4KG6"/>
<dbReference type="PDBsum" id="4KZ3"/>
<dbReference type="PDBsum" id="4KZ4"/>
<dbReference type="PDBsum" id="4KZ5"/>
<dbReference type="PDBsum" id="4KZ6"/>
<dbReference type="PDBsum" id="4KZ7"/>
<dbReference type="PDBsum" id="4KZ8"/>
<dbReference type="PDBsum" id="4KZ9"/>
<dbReference type="PDBsum" id="4KZA"/>
<dbReference type="PDBsum" id="4KZB"/>
<dbReference type="PDBsum" id="4LV0"/>
<dbReference type="PDBsum" id="4LV1"/>
<dbReference type="PDBsum" id="4LV2"/>
<dbReference type="PDBsum" id="4LV3"/>
<dbReference type="PDBsum" id="4OKP"/>
<dbReference type="PDBsum" id="4OLD"/>
<dbReference type="PDBsum" id="4OLG"/>
<dbReference type="PDBsum" id="5JOC"/>
<dbReference type="PDBsum" id="6DPT"/>
<dbReference type="PDBsum" id="6DPX"/>
<dbReference type="PDBsum" id="6DPY"/>
<dbReference type="PDBsum" id="6DPZ"/>
<dbReference type="PDBsum" id="6T35"/>
<dbReference type="PDBsum" id="6T3D"/>
<dbReference type="PDBsum" id="6T5Y"/>
<dbReference type="PDBsum" id="6T7L"/>
<dbReference type="PDBsum" id="6TBW"/>
<dbReference type="PDBsum" id="6TPM"/>
<dbReference type="PDBsum" id="6WHF"/>
<dbReference type="PDBsum" id="6X9Y"/>
<dbReference type="PDBsum" id="6XFS"/>
<dbReference type="PDBsum" id="6XG1"/>
<dbReference type="PDBsum" id="6YEN"/>
<dbReference type="PDBsum" id="6YEO"/>
<dbReference type="PDBsum" id="6YPD"/>
<dbReference type="PDBsum" id="9C6P"/>
<dbReference type="PDBsum" id="9C81"/>
<dbReference type="PDBsum" id="9C83"/>
<dbReference type="PDBsum" id="9C84"/>
<dbReference type="PDBsum" id="9DHL"/>
<dbReference type="SMR" id="P00811"/>
<dbReference type="BioGRID" id="4261277">
    <property type="interactions" value="169"/>
</dbReference>
<dbReference type="FunCoup" id="P00811">
    <property type="interactions" value="250"/>
</dbReference>
<dbReference type="IntAct" id="P00811">
    <property type="interactions" value="1"/>
</dbReference>
<dbReference type="STRING" id="511145.b4150"/>
<dbReference type="BindingDB" id="P00811"/>
<dbReference type="ChEMBL" id="CHEMBL2026"/>
<dbReference type="DrugBank" id="DB08552">
    <property type="generic name" value="(1R)-1-(2-thienylacetylamino)-1-phenylmethylboronic acid"/>
</dbReference>
<dbReference type="DrugBank" id="DB07850">
    <property type="generic name" value="(1R,2S)-2-(5-thioxo-4,5-dihydro-1H-1,2,4-triazol-3-yl)cyclohexanecarboxylic acid"/>
</dbReference>
<dbReference type="DrugBank" id="DB08375">
    <property type="generic name" value="(2R)-2-[(1R)-1-[[(2Z)-2-(2-Amino-1,3-thiazol-4-yl)-2-methoxyiminoacetyl]amino]-2-oxoethyl]-5-methylidene-2H-1,3-thiazine-4-carboxylic acid"/>
</dbReference>
<dbReference type="DrugBank" id="DB02588">
    <property type="generic name" value="(2R)-2-[(1R)-1-{[(2S)-2-Carboxy-2-(4-hydroxyphenyl)acetyl]amino}-1-methoxy-2-oxoethyl]-5-methylene-5,6-dihydro-2H-1,3-oxazine-4-carboxylic acid"/>
</dbReference>
<dbReference type="DrugBank" id="DB03658">
    <property type="generic name" value="(2R,4S)-2-[(1R)-1-{[(2R)-2-Amino-2-(4-hydroxyphenyl)acetyl]amino}-2-oxoethyl]-5,5-dimethyl-1,3-thiazolidine-4-carboxylic acid"/>
</dbReference>
<dbReference type="DrugBank" id="DB03437">
    <property type="generic name" value="(2R,4S)-2-[(1R)-1-{[(2Z)-2-(2-Amino-1,3-thiazol-4-yl)-2-(methoxyimino)acetyl]amino}-2-oxoethyl]-5,5-dimethyl-1,3-thiazolidine-4-carboxylic acid"/>
</dbReference>
<dbReference type="DrugBank" id="DB07823">
    <property type="generic name" value="(2S)-2-[(3aR,4R,7S,7aS)-1,3-dioxooctahydro-2H-4,7-methanoisoindol-2-yl]propanoic acid"/>
</dbReference>
<dbReference type="DrugBank" id="DB07057">
    <property type="generic name" value="(3S)-1-(2-hydroxyphenyl)-5-oxopyrrolidine-3-carboxylic acid"/>
</dbReference>
<dbReference type="DrugBank" id="DB07825">
    <property type="generic name" value="(3S)-1-(4-acetylphenyl)-5-oxopyrrolidine-3-carboxylic acid"/>
</dbReference>
<dbReference type="DrugBank" id="DB07663">
    <property type="generic name" value="2-[(1R)-1-CARBOXY-2-(4-HYDROXYPHENYL)ETHYL]-1,3-DIOXOISOINDOLINE-5-CARBOXYLIC ACID"/>
</dbReference>
<dbReference type="DrugBank" id="DB06922">
    <property type="generic name" value="2-[(1R)-1-carboxy-2-naphthalen-1-ylethyl]-1,3-dioxo-2,3-dihydro-1H-isoindole-5-carboxylic acid"/>
</dbReference>
<dbReference type="DrugBank" id="DB08731">
    <property type="generic name" value="2-[(1R)-2-carboxy-1-(naphthalen-1-ylmethyl)ethyl]-1,3-dioxo-2,3-dihydro-1H-isoindole-5-carboxylic acid"/>
</dbReference>
<dbReference type="DrugBank" id="DB08623">
    <property type="generic name" value="2-[CARBOXY-(2-THIOPHEN-2-YL-ACETYLAMINO)-METHYL]-5-METHYLENE-5,6-DIHYDRO-2H-[1,3]THIAZINE-4-CARBOXYLIC ACID"/>
</dbReference>
<dbReference type="DrugBank" id="DB08336">
    <property type="generic name" value="2-Methyl-2-propanyl [(1R)-2-methyl-1-(1,3,4-oxadiazol-2-yl)propyl]carbamate"/>
</dbReference>
<dbReference type="DrugBank" id="DB08337">
    <property type="generic name" value="2-Methyl-2-propanyl [(1S)-2-methyl-1-(1,3,4-oxadiazol-2-yl)propyl]carbamate"/>
</dbReference>
<dbReference type="DrugBank" id="DB07803">
    <property type="generic name" value="2-phenyl-1H-imidazole-4-carboxylic acid"/>
</dbReference>
<dbReference type="DrugBank" id="DB02858">
    <property type="generic name" value="3-(4-Benzenesulfonyl-Thiophene-2-Sulfonylamino)-Phenylboronic Acid"/>
</dbReference>
<dbReference type="DrugBank" id="DB08306">
    <property type="generic name" value="3-[(3-Nitrophenyl)sulfamoyl]-2-thiophenecarboxylic acid"/>
</dbReference>
<dbReference type="DrugBank" id="DB07927">
    <property type="generic name" value="3-[(4-Carboxy-2-hydroxyphenyl)sulfamoyl]-2-thiophenecarboxylic acid"/>
</dbReference>
<dbReference type="DrugBank" id="DB08573">
    <property type="generic name" value="3-[(4-CHLOROANILINO)SULFONYL]THIOPHENE-2-CARBOXYLIC ACID"/>
</dbReference>
<dbReference type="DrugBank" id="DB02797">
    <property type="generic name" value="3-Nitrophenylboronic Acid"/>
</dbReference>
<dbReference type="DrugBank" id="DB08551">
    <property type="generic name" value="3-{(R)-(Dihydroxyboryl)[(2-thienylacetyl)amino]methyl}benzoic acid"/>
</dbReference>
<dbReference type="DrugBank" id="DB02627">
    <property type="generic name" value="4,4'-Biphenyldiboronic Acid"/>
</dbReference>
<dbReference type="DrugBank" id="DB02503">
    <property type="generic name" value="4-(Carboxyvin-2-Yl)Phenylboronic Acid"/>
</dbReference>
<dbReference type="DrugBank" id="DB07541">
    <property type="generic name" value="4-(dihydroxyboranyl)-2-({[4-(phenylsulfonyl)thiophen-2-yl]sulfonyl}amino)benzoic acid"/>
</dbReference>
<dbReference type="DrugBank" id="DB07114">
    <property type="generic name" value="4-[(METHYLSULFONYL)AMINO]BENZOIC ACID"/>
</dbReference>
<dbReference type="DrugBank" id="DB03140">
    <property type="generic name" value="4-Carboxyphenylboronic Acid"/>
</dbReference>
<dbReference type="DrugBank" id="DB07824">
    <property type="generic name" value="4-ethyl-5-methyl-2-(1H-tetrazol-5-yl)-1,2-dihydro-3H-pyrazol-3-one"/>
</dbReference>
<dbReference type="DrugBank" id="DB04293">
    <property type="generic name" value="7-(2-Amino-2-Phenyl-Acetylamino)-3-Chloro-8-Oxo-1-Aza-Bicyclo[4.2.0]Oct-2-Ene-2-Carboxylic Acid"/>
</dbReference>
<dbReference type="DrugBank" id="DB03530">
    <property type="generic name" value="Acylated ceftazidime"/>
</dbReference>
<dbReference type="DrugBank" id="DB04360">
    <property type="generic name" value="Benzo[B]Thiophene-2-Boronic Acid"/>
</dbReference>
<dbReference type="DrugBank" id="DB00456">
    <property type="generic name" value="Cefalotin"/>
</dbReference>
<dbReference type="DrugBank" id="DB04035">
    <property type="generic name" value="Ceftazidime BATSI"/>
</dbReference>
<dbReference type="DrugBank" id="DB02247">
    <property type="generic name" value="Hydrolyzed Cephalothin"/>
</dbReference>
<dbReference type="DrugBank" id="DB01896">
    <property type="generic name" value="M-Aminophenylboronic Acid"/>
</dbReference>
<dbReference type="DrugBank" id="DB02094">
    <property type="generic name" value="N-2-Thiophen-2-Yl-Acetamide Boronic Acid"/>
</dbReference>
<dbReference type="DrugBank" id="DB02772">
    <property type="generic name" value="Sucrose"/>
</dbReference>
<dbReference type="DrugCentral" id="P00811"/>
<dbReference type="CARD" id="ARO:3004290">
    <property type="molecule name" value="Ecol_ampC_BLA"/>
    <property type="mechanism identifier" value="ARO:0001004"/>
    <property type="mechanism name" value="antibiotic inactivation"/>
</dbReference>
<dbReference type="MEROPS" id="S12.006"/>
<dbReference type="jPOST" id="P00811"/>
<dbReference type="PaxDb" id="511145-b4150"/>
<dbReference type="EnsemblBacteria" id="AAC77110">
    <property type="protein sequence ID" value="AAC77110"/>
    <property type="gene ID" value="b4150"/>
</dbReference>
<dbReference type="GeneID" id="948669"/>
<dbReference type="KEGG" id="ecj:JW4111"/>
<dbReference type="KEGG" id="eco:b4150"/>
<dbReference type="KEGG" id="ecoc:C3026_22435"/>
<dbReference type="PATRIC" id="fig|1411691.4.peg.2548"/>
<dbReference type="EchoBASE" id="EB0038"/>
<dbReference type="eggNOG" id="COG1680">
    <property type="taxonomic scope" value="Bacteria"/>
</dbReference>
<dbReference type="HOGENOM" id="CLU_020027_10_0_6"/>
<dbReference type="InParanoid" id="P00811"/>
<dbReference type="OMA" id="ANRNYPN"/>
<dbReference type="OrthoDB" id="5377431at2"/>
<dbReference type="PhylomeDB" id="P00811"/>
<dbReference type="BioCyc" id="EcoCyc:EG10040-MONOMER"/>
<dbReference type="BioCyc" id="MetaCyc:EG10040-MONOMER"/>
<dbReference type="BRENDA" id="3.5.2.6">
    <property type="organism ID" value="2026"/>
</dbReference>
<dbReference type="SABIO-RK" id="P00811"/>
<dbReference type="EvolutionaryTrace" id="P00811"/>
<dbReference type="PRO" id="PR:P00811"/>
<dbReference type="Proteomes" id="UP000000625">
    <property type="component" value="Chromosome"/>
</dbReference>
<dbReference type="GO" id="GO:0030288">
    <property type="term" value="C:outer membrane-bounded periplasmic space"/>
    <property type="evidence" value="ECO:0007669"/>
    <property type="project" value="InterPro"/>
</dbReference>
<dbReference type="GO" id="GO:0008800">
    <property type="term" value="F:beta-lactamase activity"/>
    <property type="evidence" value="ECO:0000314"/>
    <property type="project" value="EcoliWiki"/>
</dbReference>
<dbReference type="GO" id="GO:0017001">
    <property type="term" value="P:antibiotic catabolic process"/>
    <property type="evidence" value="ECO:0000314"/>
    <property type="project" value="EcoCyc"/>
</dbReference>
<dbReference type="GO" id="GO:0046677">
    <property type="term" value="P:response to antibiotic"/>
    <property type="evidence" value="ECO:0007669"/>
    <property type="project" value="UniProtKB-KW"/>
</dbReference>
<dbReference type="FunFam" id="3.40.710.10:FF:000012">
    <property type="entry name" value="Beta-lactamase"/>
    <property type="match status" value="1"/>
</dbReference>
<dbReference type="Gene3D" id="3.40.710.10">
    <property type="entry name" value="DD-peptidase/beta-lactamase superfamily"/>
    <property type="match status" value="1"/>
</dbReference>
<dbReference type="InterPro" id="IPR050491">
    <property type="entry name" value="Bact_CellWall_Synth/Modif"/>
</dbReference>
<dbReference type="InterPro" id="IPR001466">
    <property type="entry name" value="Beta-lactam-related"/>
</dbReference>
<dbReference type="InterPro" id="IPR012338">
    <property type="entry name" value="Beta-lactam/transpept-like"/>
</dbReference>
<dbReference type="InterPro" id="IPR001586">
    <property type="entry name" value="Beta-lactam_class-C_AS"/>
</dbReference>
<dbReference type="NCBIfam" id="NF033085">
    <property type="entry name" value="bla_class_C"/>
    <property type="match status" value="1"/>
</dbReference>
<dbReference type="NCBIfam" id="NF000185">
    <property type="entry name" value="BlaEC"/>
    <property type="match status" value="1"/>
</dbReference>
<dbReference type="NCBIfam" id="NF012173">
    <property type="entry name" value="CMY2-MIR-ACT-EC"/>
    <property type="match status" value="1"/>
</dbReference>
<dbReference type="PANTHER" id="PTHR46825:SF8">
    <property type="entry name" value="BETA-LACTAMASE-RELATED"/>
    <property type="match status" value="1"/>
</dbReference>
<dbReference type="PANTHER" id="PTHR46825">
    <property type="entry name" value="D-ALANYL-D-ALANINE-CARBOXYPEPTIDASE/ENDOPEPTIDASE AMPH"/>
    <property type="match status" value="1"/>
</dbReference>
<dbReference type="Pfam" id="PF00144">
    <property type="entry name" value="Beta-lactamase"/>
    <property type="match status" value="1"/>
</dbReference>
<dbReference type="SUPFAM" id="SSF56601">
    <property type="entry name" value="beta-lactamase/transpeptidase-like"/>
    <property type="match status" value="1"/>
</dbReference>
<dbReference type="PROSITE" id="PS00336">
    <property type="entry name" value="BETA_LACTAMASE_C"/>
    <property type="match status" value="1"/>
</dbReference>
<reference key="1">
    <citation type="journal article" date="1981" name="Proc. Natl. Acad. Sci. U.S.A.">
        <title>ampC cephalosporinase of Escherichia coli K-12 has a different evolutionary origin from that of beta-lactamases of the penicillinase type.</title>
        <authorList>
            <person name="Jaurin B."/>
            <person name="Grundstroem T."/>
        </authorList>
    </citation>
    <scope>NUCLEOTIDE SEQUENCE [GENOMIC DNA]</scope>
    <scope>PROTEIN SEQUENCE OF 20-31</scope>
    <source>
        <strain>K12</strain>
    </source>
</reference>
<reference evidence="36" key="2">
    <citation type="journal article" date="1995" name="Nucleic Acids Res.">
        <title>Analysis of the Escherichia coli genome VI: DNA sequence of the region from 92.8 through 100 minutes.</title>
        <authorList>
            <person name="Burland V.D."/>
            <person name="Plunkett G. III"/>
            <person name="Sofia H.J."/>
            <person name="Daniels D.L."/>
            <person name="Blattner F.R."/>
        </authorList>
    </citation>
    <scope>NUCLEOTIDE SEQUENCE [LARGE SCALE GENOMIC DNA]</scope>
    <source>
        <strain>K12 / MG1655 / ATCC 47076</strain>
    </source>
</reference>
<reference evidence="36" key="3">
    <citation type="journal article" date="1997" name="Science">
        <title>The complete genome sequence of Escherichia coli K-12.</title>
        <authorList>
            <person name="Blattner F.R."/>
            <person name="Plunkett G. III"/>
            <person name="Bloch C.A."/>
            <person name="Perna N.T."/>
            <person name="Burland V."/>
            <person name="Riley M."/>
            <person name="Collado-Vides J."/>
            <person name="Glasner J.D."/>
            <person name="Rode C.K."/>
            <person name="Mayhew G.F."/>
            <person name="Gregor J."/>
            <person name="Davis N.W."/>
            <person name="Kirkpatrick H.A."/>
            <person name="Goeden M.A."/>
            <person name="Rose D.J."/>
            <person name="Mau B."/>
            <person name="Shao Y."/>
        </authorList>
    </citation>
    <scope>NUCLEOTIDE SEQUENCE [LARGE SCALE GENOMIC DNA]</scope>
    <source>
        <strain>K12 / MG1655 / ATCC 47076</strain>
    </source>
</reference>
<reference key="4">
    <citation type="journal article" date="2006" name="Mol. Syst. Biol.">
        <title>Highly accurate genome sequences of Escherichia coli K-12 strains MG1655 and W3110.</title>
        <authorList>
            <person name="Hayashi K."/>
            <person name="Morooka N."/>
            <person name="Yamamoto Y."/>
            <person name="Fujita K."/>
            <person name="Isono K."/>
            <person name="Choi S."/>
            <person name="Ohtsubo E."/>
            <person name="Baba T."/>
            <person name="Wanner B.L."/>
            <person name="Mori H."/>
            <person name="Horiuchi T."/>
        </authorList>
    </citation>
    <scope>NUCLEOTIDE SEQUENCE [LARGE SCALE GENOMIC DNA]</scope>
    <source>
        <strain>K12 / W3110 / ATCC 27325 / DSM 5911</strain>
    </source>
</reference>
<reference key="5">
    <citation type="journal article" date="1982" name="Proc. Natl. Acad. Sci. U.S.A.">
        <title>Overlap between ampC and frd operons on the Escherichia coli chromosome.</title>
        <authorList>
            <person name="Grundstroem T."/>
            <person name="Jaurin B."/>
        </authorList>
    </citation>
    <scope>NUCLEOTIDE SEQUENCE [GENOMIC DNA] OF 1-29</scope>
</reference>
<reference key="6">
    <citation type="journal article" date="1980" name="Antimicrob. Agents Chemother.">
        <title>Purification and properties of cephalosporinase in Escherichia coli.</title>
        <authorList>
            <person name="Minami S."/>
            <person name="Inoue M."/>
            <person name="Mitsuhashi S."/>
        </authorList>
    </citation>
    <scope>FUNCTION</scope>
    <scope>CATALYTIC ACTIVITY</scope>
    <scope>ACTIVITY REGULATION</scope>
</reference>
<reference key="7">
    <citation type="journal article" date="1988" name="Biochem. J.">
        <title>A survey of the kinetic parameters of class C beta-lactamases. Penicillins.</title>
        <authorList>
            <person name="Galleni M."/>
            <person name="Frere J.M."/>
        </authorList>
    </citation>
    <scope>FUNCTION</scope>
    <scope>CATALYTIC ACTIVITY</scope>
    <scope>BIOPHYSICOCHEMICAL PROPERTIES</scope>
</reference>
<reference key="8">
    <citation type="journal article" date="1988" name="Biochem. J.">
        <title>A survey of the kinetic parameters of class C beta-lactamases. Cephalosporins and other beta-lactam compounds.</title>
        <authorList>
            <person name="Galleni M."/>
            <person name="Amicosante G."/>
            <person name="Frere J.M."/>
        </authorList>
    </citation>
    <scope>FUNCTION</scope>
    <scope>CATALYTIC ACTIVITY</scope>
    <scope>BIOPHYSICOCHEMICAL PROPERTIES</scope>
</reference>
<reference key="9">
    <citation type="journal article" date="1997" name="Electrophoresis">
        <title>Escherichia coli proteome analysis using the gene-protein database.</title>
        <authorList>
            <person name="VanBogelen R.A."/>
            <person name="Abshire K.Z."/>
            <person name="Moldover B."/>
            <person name="Olson E.R."/>
            <person name="Neidhardt F.C."/>
        </authorList>
    </citation>
    <scope>IDENTIFICATION BY 2D-GEL</scope>
</reference>
<reference key="10">
    <citation type="journal article" date="2020" name="Antimicrob. Agents Chemother.">
        <title>A Standard Numbering Scheme for Class C beta-Lactamases.</title>
        <authorList>
            <person name="Mack A.R."/>
            <person name="Barnes M.D."/>
            <person name="Taracila M.A."/>
            <person name="Hujer A.M."/>
            <person name="Hujer K.M."/>
            <person name="Cabot G."/>
            <person name="Feldgarden M."/>
            <person name="Haft D.H."/>
            <person name="Klimke W."/>
            <person name="van den Akker F."/>
            <person name="Vila A.J."/>
            <person name="Smania A."/>
            <person name="Haider S."/>
            <person name="Papp-Wallace K.M."/>
            <person name="Bradford P.A."/>
            <person name="Rossolini G.M."/>
            <person name="Docquier J.D."/>
            <person name="Frere J.M."/>
            <person name="Galleni M."/>
            <person name="Hanson N.D."/>
            <person name="Oliver A."/>
            <person name="Plesiat P."/>
            <person name="Poirel L."/>
            <person name="Nordmann P."/>
            <person name="Palzkill T.G."/>
            <person name="Jacoby G.A."/>
            <person name="Bush K."/>
            <person name="Bonomo R.A."/>
        </authorList>
    </citation>
    <scope>AMINO ACID NUMBERING SCHEME</scope>
</reference>
<reference evidence="67 80" key="11">
    <citation type="journal article" date="1998" name="Biochemistry">
        <title>Three-dimensional structure of AmpC beta-lactamase from Escherichia coli bound to a transition-state analog: possible implications for the oxyanion hypothesis and for inhibitor design.</title>
        <authorList>
            <person name="Usher K.C."/>
            <person name="Blaszczak L.C."/>
            <person name="Weston G.S."/>
            <person name="Shoichet B.K."/>
            <person name="Remington S.J."/>
        </authorList>
    </citation>
    <scope>X-RAY CRYSTALLOGRAPHY (2.0 ANGSTROMS) IN APO FORM AND IN COMPLEX WITH BORONIC ACID INHIBITOR</scope>
    <scope>ACTIVE SITE</scope>
</reference>
<reference evidence="37" key="12">
    <citation type="journal article" date="1999" name="Protein Sci.">
        <title>The complexed structure and antimicrobial activity of a non-beta-lactam inhibitor of AmpC beta-lactamase.</title>
        <authorList>
            <person name="Powers R.A."/>
            <person name="Blazquez J."/>
            <person name="Weston G.S."/>
            <person name="Morosini M.I."/>
            <person name="Baquero F."/>
            <person name="Shoichet B.K."/>
        </authorList>
    </citation>
    <scope>X-RAY CRYSTALLOGRAPHY (2.25 ANGSTROMS) IN COMPLEX WITH NON-BETA-LACTAM INHIBITOR</scope>
    <scope>ACTIVITY REGULATION</scope>
    <scope>INDUCTION</scope>
</reference>
<reference evidence="38 39 40" key="13">
    <citation type="journal article" date="2000" name="J. Am. Chem. Soc.">
        <title>Crystal Structures of Substrate and Inhibitor Complexes with AmpC Beta-Lactamase: Possible Implications for Substrate-Assisted Catalysis.</title>
        <authorList>
            <person name="Patera A."/>
            <person name="Blaszczak L.C."/>
            <person name="Shoichet B.K."/>
        </authorList>
    </citation>
    <scope>X-RAY CRYSTALLOGRAPHY (2.20 ANGSTROMS) OF 20-377 OF MUTANT LEU-136/GLU-166 IN COMPLEXES WITH BETA-LACTAM SUBSTRATE AND INHIBITORS</scope>
    <scope>ACTIVE SITE</scope>
</reference>
<reference evidence="44" key="14">
    <citation type="journal article" date="2001" name="Biochemistry">
        <title>Inhibition of AmpC beta-lactamase through a destabilizing interaction in the active site.</title>
        <authorList>
            <person name="Trehan I."/>
            <person name="Beadle B.M."/>
            <person name="Shoichet B.K."/>
        </authorList>
    </citation>
    <scope>X-RAY CRYSTALLOGRAPHY (1.83 ANGSTROMS) OF 20-377 OF MUTANT ALA-168 IN COMPLEX WITH INHIBITORS</scope>
    <scope>MUTAGENESIS OF ASN-168</scope>
</reference>
<reference evidence="45 46" key="15">
    <citation type="journal article" date="2001" name="Biochemistry">
        <title>Structures of ceftazidime and its transition-state analog in complex with AmpC beta-lactamase: implications for resistance mutations and inhibitor design.</title>
        <authorList>
            <person name="Powers R.A."/>
            <person name="Caselli E."/>
            <person name="Focia P.J."/>
            <person name="Prati F."/>
            <person name="Shoichet B.K."/>
        </authorList>
    </citation>
    <scope>X-RAY CRYSTALLOGRAPHY (2.0 ANGSTROMS) IN COMPLEXES WITH SUBSTRATE ANALOGS</scope>
    <scope>ACTIVE SITE</scope>
</reference>
<reference evidence="41 42" key="16">
    <citation type="journal article" date="2001" name="Chem. Biol.">
        <title>Energetic, structural, and antimicrobial analyses of beta-lactam side chain recognition by beta-lactamases.</title>
        <authorList>
            <person name="Caselli E."/>
            <person name="Powers R.A."/>
            <person name="Blasczcak L.C."/>
            <person name="Wu C.Y."/>
            <person name="Prati F."/>
            <person name="Shoichet B.K."/>
        </authorList>
    </citation>
    <scope>X-RAY CRYSTALLOGRAPHY (1.75 ANGSTROMS) OF 20-376 IN COMPLEXES WITH ACYLGLYCINEBORONIC ACID INHIBITORS</scope>
</reference>
<reference evidence="43" key="17">
    <citation type="journal article" date="2001" name="Chem. Biol.">
        <title>Structure-based design and in-parallel synthesis of inhibitors of AmpC beta-lactamase.</title>
        <authorList>
            <person name="Tondi D."/>
            <person name="Powers R.A."/>
            <person name="Caselli E."/>
            <person name="Negri M.C."/>
            <person name="Blazquez J."/>
            <person name="Costi M.P."/>
            <person name="Shoichet B.K."/>
        </authorList>
    </citation>
    <scope>X-RAY CRYSTALLOGRAPHY (2.10 ANGSTROMS) OF 20-377 IN COMPLEX WITH INHIBITOR</scope>
</reference>
<reference evidence="57" key="18">
    <citation type="journal article" date="2002" name="Antimicrob. Agents Chemother.">
        <title>Structural basis for imipenem inhibition of class C beta-lactamases.</title>
        <authorList>
            <person name="Beadle B.M."/>
            <person name="Shoichet B.K."/>
        </authorList>
    </citation>
    <scope>X-RAY CRYSTALLOGRAPHY (1.80 ANGSTROMS) OF 20-377 IN COMPLEX WITH INHIBITOR IMIPENEM</scope>
</reference>
<reference evidence="58 59" key="19">
    <citation type="journal article" date="2002" name="Chem. Biol.">
        <title>Using steric hindrance to design new inhibitors of class C beta-lactamases.</title>
        <authorList>
            <person name="Trehan I."/>
            <person name="Morandi F."/>
            <person name="Blaszczak L.C."/>
            <person name="Shoichet B.K."/>
        </authorList>
    </citation>
    <scope>X-RAY CRYSTALLOGRAPHY (1.72 ANGSTROMS) OF 20-377 IN COMPLEXES WITH SUBSTRATE AMOXICILLIN AND INHIBITOR</scope>
    <scope>FUNCTION</scope>
    <scope>CATALYTIC ACTIVITY</scope>
    <scope>BIOPHYSICOCHEMICAL PROPERTIES</scope>
</reference>
<reference evidence="47 48 49 50 51" key="20">
    <citation type="journal article" date="2002" name="J. Med. Chem.">
        <title>Structure-based approach for binding site identification on AmpC beta-lactamase.</title>
        <authorList>
            <person name="Powers R.A."/>
            <person name="Shoichet B.K."/>
        </authorList>
    </citation>
    <scope>X-RAY CRYSTALLOGRAPHY (1.72 ANGSTROMS) OF 20-377 IN APO FORM AND IN COMPLEXES WITH ARYLBORONIC ACID INHIBITORS</scope>
</reference>
<reference evidence="34 35 54 55" key="21">
    <citation type="journal article" date="2002" name="J. Mol. Biol.">
        <title>Structural bases of stability-function tradeoffs in enzymes.</title>
        <authorList>
            <person name="Beadle B.M."/>
            <person name="Shoichet B.K."/>
        </authorList>
    </citation>
    <scope>X-RAY CRYSTALLOGRAPHY (1.53 ANGSTROMS)</scope>
    <scope>MUTAGENESIS OF SER-80; LYS-83; TYR-166; ASN-168 AND LYS-331</scope>
</reference>
<reference evidence="52 53" key="22">
    <citation type="journal article" date="2002" name="Structure">
        <title>Structural milestones in the reaction pathway of an amide hydrolase: substrate, acyl, and product complexes of cephalothin with AmpC beta-lactamase.</title>
        <authorList>
            <person name="Beadle B.M."/>
            <person name="Trehan I."/>
            <person name="Focia P.J."/>
            <person name="Shoichet B.K."/>
        </authorList>
    </citation>
    <scope>X-RAY CRYSTALLOGRAPHY (1.53 ANGSTROMS) OF 20-377 OF APO FORM AND OF MUTANT GLY-80 IN COMPLEXES WITH CEFALOTIN SUBSTRATE AND INHIBITOR</scope>
    <scope>ACTIVE SITE</scope>
</reference>
<reference evidence="56" key="23">
    <citation type="journal article" date="2002" name="Structure">
        <title>Structure-based discovery of a novel, noncovalent inhibitor of AmpC beta-lactamase.</title>
        <authorList>
            <person name="Powers R.A."/>
            <person name="Morandi F."/>
            <person name="Shoichet B.K."/>
        </authorList>
    </citation>
    <scope>X-RAY CRYSTALLOGRAPHY (1.94 ANGSTROMS) OF 20-377 IN COMPLEX WITH INHIBITOR</scope>
</reference>
<reference evidence="63 64" key="24">
    <citation type="journal article" date="2003" name="Biochemistry">
        <title>Thermodynamic cycle analysis and inhibitor design against beta-lactamase.</title>
        <authorList>
            <person name="Roth T.A."/>
            <person name="Minasov G."/>
            <person name="Morandi S."/>
            <person name="Prati F."/>
            <person name="Shoichet B.K."/>
        </authorList>
    </citation>
    <scope>X-RAY CRYSTALLOGRAPHY (1.39 ANGSTROMS) OF 20-377 OF MUTANT ALA-305 IN COMPLEXES WITH INHIBITORS</scope>
    <scope>MUTAGENESIS OF LEU-135; ASN-305 AND LEU-309</scope>
</reference>
<reference evidence="60 61" key="25">
    <citation type="journal article" date="2003" name="J. Am. Chem. Soc.">
        <title>Nanomolar inhibitors of AmpC beta-lactamase.</title>
        <authorList>
            <person name="Morandi F."/>
            <person name="Caselli E."/>
            <person name="Morandi S."/>
            <person name="Focia P.J."/>
            <person name="Blazquez J."/>
            <person name="Shoichet B.K."/>
            <person name="Prati F."/>
        </authorList>
    </citation>
    <scope>X-RAY CRYSTALLOGRAPHY (1.83 ANGSTROMS) IN COMPLEXES WITH BORONIC ACID INHIBITORS</scope>
</reference>
<reference evidence="62" key="26">
    <citation type="journal article" date="2003" name="J. Am. Chem. Soc.">
        <title>Structural aspects for evolution of beta-lactamases from penicillin-binding proteins.</title>
        <authorList>
            <person name="Meroueh S.O."/>
            <person name="Minasov G."/>
            <person name="Lee W."/>
            <person name="Shoichet B.K."/>
            <person name="Mobashery S."/>
        </authorList>
    </citation>
    <scope>X-RAY CRYSTALLOGRAPHY (1.71 ANGSTROMS) OF 20-377 OF MUTANT LYS-136/GLU-166 IN COMPLEX WITH SUBSTRATE ANALOG</scope>
</reference>
<reference evidence="65 66" key="27">
    <citation type="journal article" date="2005" name="J. Am. Chem. Soc.">
        <title>Structure-based optimization of a non-beta-lactam lead results in inhibitors that do not up-regulate beta-lactamase expression in cell culture.</title>
        <authorList>
            <person name="Tondi D."/>
            <person name="Morandi F."/>
            <person name="Bonnet R."/>
            <person name="Costi M.P."/>
            <person name="Shoichet B.K."/>
        </authorList>
    </citation>
    <scope>X-RAY CRYSTALLOGRAPHY (1.96 ANGSTROMS) OF 20-377 IN COMPLEXES WITH NON-BETA-LACTAM INHIBITORS</scope>
</reference>
<reference evidence="68" key="28">
    <citation type="journal article" date="2006" name="J. Am. Chem. Soc.">
        <title>The deacylation mechanism of AmpC beta-lactamase at ultrahigh resolution.</title>
        <authorList>
            <person name="Chen Y."/>
            <person name="Minasov G."/>
            <person name="Roth T.A."/>
            <person name="Prati F."/>
            <person name="Shoichet B.K."/>
        </authorList>
    </citation>
    <scope>X-RAY CRYSTALLOGRAPHY (1.07 ANGSTROMS) OF 20-377 OF MUTANT ALA-305 IN COMPLEX WITH BORONIC ACID DEACYLATION TRANSITION-STATE ANALOG</scope>
    <scope>ACTIVE SITE</scope>
</reference>
<reference evidence="69 70 71 72" key="29">
    <citation type="journal article" date="2006" name="Nat. Chem. Biol.">
        <title>Deconstructing fragment-based inhibitor discovery.</title>
        <authorList>
            <person name="Babaoglu K."/>
            <person name="Shoichet B.K."/>
        </authorList>
    </citation>
    <scope>X-RAY CRYSTALLOGRAPHY (1.16 ANGSTROMS) OF 20-377 IN COMPLEXES WITH NON-BETA-LACTAM INHIBITORS</scope>
</reference>
<reference evidence="73" key="30">
    <citation type="journal article" date="2007" name="J. Med. Chem.">
        <title>Optimizing cell permeation of an antibiotic resistance inhibitor for improved efficacy.</title>
        <authorList>
            <person name="Venturelli A."/>
            <person name="Tondi D."/>
            <person name="Cancian L."/>
            <person name="Morandi F."/>
            <person name="Cannazza G."/>
            <person name="Segatore B."/>
            <person name="Prati F."/>
            <person name="Amicosante G."/>
            <person name="Shoichet B.K."/>
            <person name="Costi M.P."/>
        </authorList>
    </citation>
    <scope>X-RAY CRYSTALLOGRAPHY (2.20 ANGSTROMS) OF 20-377 IN COMPLEX WITH BORONIC ACID INHIBITOR</scope>
    <scope>FUNCTION</scope>
</reference>
<reference evidence="74" key="31">
    <citation type="journal article" date="2007" name="J. Am. Chem. Soc.">
        <title>O-aryloxycarbonyl hydroxamates: new beta-lactamase inhibitors that cross-link the active site.</title>
        <authorList>
            <person name="Wyrembak P.N."/>
            <person name="Babaoglu K."/>
            <person name="Pelto R.B."/>
            <person name="Shoichet B.K."/>
            <person name="Pratt R.F."/>
        </authorList>
    </citation>
    <scope>X-RAY CRYSTALLOGRAPHY (1.80 ANGSTROMS) OF 20-377</scope>
    <scope>ACTIVITY REGULATION</scope>
</reference>
<reference evidence="79" key="32">
    <citation type="journal article" date="2008" name="Bioorg. Med. Chem.">
        <title>Structure-based optimization of cephalothin-analogue boronic acids as beta-lactamase inhibitors.</title>
        <authorList>
            <person name="Morandi S."/>
            <person name="Morandi F."/>
            <person name="Caselli E."/>
            <person name="Shoichet B.K."/>
            <person name="Prati F."/>
        </authorList>
    </citation>
    <scope>X-RAY CRYSTALLOGRAPHY (2.00 ANGSTROMS) OF 20-377 IN COMPLEX WITH SUBSTRATE ANALOG INHIBITOR</scope>
    <scope>ACTIVITY REGULATION</scope>
</reference>
<reference evidence="75 76 77 78" key="33">
    <citation type="journal article" date="2008" name="J. Med. Chem.">
        <title>Comprehensive mechanistic analysis of hits from high-throughput and docking screens against beta-lactamase.</title>
        <authorList>
            <person name="Babaoglu K."/>
            <person name="Simeonov A."/>
            <person name="Irwin J.J."/>
            <person name="Nelson M.E."/>
            <person name="Feng B."/>
            <person name="Thomas C.J."/>
            <person name="Cancian L."/>
            <person name="Costi M.P."/>
            <person name="Maltby D.A."/>
            <person name="Jadhav A."/>
            <person name="Inglese J."/>
            <person name="Austin C.P."/>
            <person name="Shoichet B.K."/>
        </authorList>
    </citation>
    <scope>X-RAY CRYSTALLOGRAPHY (1.80 ANGSTROMS) OF 20-377 IN COMPLEXES WITH INHIBITORS</scope>
</reference>
<reference evidence="84 85 86 87 88 89 90" key="34">
    <citation type="journal article" date="2009" name="Proc. Natl. Acad. Sci. U.S.A.">
        <title>Docking for fragment inhibitors of AmpC beta-lactamase.</title>
        <authorList>
            <person name="Teotico D.G."/>
            <person name="Babaoglu K."/>
            <person name="Rocklin G.J."/>
            <person name="Ferreira R.S."/>
            <person name="Giannetti A.M."/>
            <person name="Shoichet B.K."/>
        </authorList>
    </citation>
    <scope>X-RAY CRYSTALLOGRAPHY (1.80 ANGSTROMS) OF 20-377 IN COMPLEXES WITH INHIBITORS</scope>
</reference>
<reference evidence="82 83" key="35">
    <citation type="journal article" date="2009" name="Protein Sci.">
        <title>Re-examining the role of Lys67 in class C beta-lactamase catalysis.</title>
        <authorList>
            <person name="Chen Y."/>
            <person name="McReynolds A."/>
            <person name="Shoichet B.K."/>
        </authorList>
    </citation>
    <scope>X-RAY CRYSTALLOGRAPHY (1.50 ANGSTROMS) OF 20-377 OF MUTANT ARG-83 AND APO FORMS IN COMPLEXES WITH BORONIC ACID INHIBITOR</scope>
    <scope>BIOPHYSICOCHEMICAL PROPERTIES</scope>
    <scope>MUTAGENESIS OF LYS-83</scope>
</reference>
<reference evidence="81" key="36">
    <citation type="journal article" date="2010" name="Bioorg. Med. Chem. Lett.">
        <title>Structural study of phenyl boronic acid derivatives as AmpC beta-lactamase inhibitors.</title>
        <authorList>
            <person name="Tondi D."/>
            <person name="Calo S."/>
            <person name="Shoichet B.K."/>
            <person name="Costi M.P."/>
        </authorList>
    </citation>
    <scope>X-RAY CRYSTALLOGRAPHY (2.10 ANGSTROMS) OF 20-377 IN COMPLEX WITH BORONIC ACID INHIBITOR</scope>
</reference>
<reference evidence="98 99 100" key="37">
    <citation type="journal article" date="2010" name="J. Med. Chem.">
        <title>Design, synthesis, crystal structures, and antimicrobial activity of sulfonamide boronic acids as beta-lactamase inhibitors.</title>
        <authorList>
            <person name="Eidam O."/>
            <person name="Romagnoli C."/>
            <person name="Caselli E."/>
            <person name="Babaoglu K."/>
            <person name="Pohlhaus D.T."/>
            <person name="Karpiak J."/>
            <person name="Bonnet R."/>
            <person name="Shoichet B.K."/>
            <person name="Prati F."/>
        </authorList>
    </citation>
    <scope>X-RAY CRYSTALLOGRAPHY (1.60 ANGSTROMS) OF 20-377 IN COMPLEXES WITH SULFONAMIDE BORONIC ACID INHIBITORS</scope>
    <scope>ACTIVITY REGULATION</scope>
</reference>
<reference evidence="91 92 93 94 95 96 97" key="38">
    <citation type="journal article" date="2010" name="J. Mol. Biol.">
        <title>Structural bases for stability-function tradeoffs in antibiotic resistance.</title>
        <authorList>
            <person name="Thomas V.L."/>
            <person name="McReynolds A.C."/>
            <person name="Shoichet B.K."/>
        </authorList>
    </citation>
    <scope>X-RAY CRYSTALLOGRAPHY (1.63 ANGSTROMS) OF 20-377 OF MUTANTS ILE-86; ALA-ALA-ALA-226 INS; LYS-235; GLY-237 AND GLU-314 IN COMPLEXES WITH SUBSTRATE CEFOTAXIME OR WITH BORONIC ACID INHIBITOR</scope>
    <scope>FUNCTION</scope>
    <scope>MUTAGENESIS OF THR-86; HIS-226; GLU-235; TYR-237 AND VAL-314</scope>
</reference>
<reference evidence="101 102 103 104 105 106 107" key="39">
    <citation type="journal article" date="2012" name="Proc. Natl. Acad. Sci. U.S.A.">
        <title>Fragment-guided design of subnanomolar beta-lactamase inhibitors active in vivo.</title>
        <authorList>
            <person name="Eidam O."/>
            <person name="Romagnoli C."/>
            <person name="Dalmasso G."/>
            <person name="Barelier S."/>
            <person name="Caselli E."/>
            <person name="Bonnet R."/>
            <person name="Shoichet B.K."/>
            <person name="Prati F."/>
        </authorList>
    </citation>
    <scope>X-RAY CRYSTALLOGRAPHY (1.43 ANGSTROMS) OF 20-377 IN COMPLEXES WITH BORONIC ACID INHIBITORS</scope>
    <scope>FUNCTION</scope>
    <scope>ACTIVITY REGULATION</scope>
</reference>
<reference evidence="108 112 113 114 115" key="40">
    <citation type="submission" date="2013-03" db="PDB data bank">
        <title>Complexed structures of AmpC beta-lactamase.</title>
        <authorList>
            <person name="Docter B.E."/>
            <person name="Baggett V.L."/>
            <person name="Powers R.A."/>
            <person name="Wallar B.J."/>
        </authorList>
    </citation>
    <scope>X-RAY CRYSTALLOGRAPHY (1.65 ANGSTROMS) OF 20-377</scope>
</reference>
<reference evidence="116 117 118 119 120 121 122 123 124" key="41">
    <citation type="journal article" date="2014" name="ACS Chem. Biol.">
        <title>Increasing chemical space coverage by combining empirical and computational fragment screens.</title>
        <authorList>
            <person name="Barelier S."/>
            <person name="Eidam O."/>
            <person name="Fish I."/>
            <person name="Hollander J."/>
            <person name="Figaroa F."/>
            <person name="Nachane R."/>
            <person name="Irwin J.J."/>
            <person name="Shoichet B.K."/>
            <person name="Siegal G."/>
        </authorList>
    </citation>
    <scope>X-RAY CRYSTALLOGRAPHY (1.35 ANGSTROMS) OF 20-377 IN COMPLEXES WITH INHIBITORS</scope>
</reference>
<reference evidence="109 110 111" key="42">
    <citation type="journal article" date="2014" name="Bioorg. Med. Chem.">
        <title>Structure-based efforts to optimize a non-beta-lactam inhibitor of AmpC beta-lactamase.</title>
        <authorList>
            <person name="Hendershot J.M."/>
            <person name="Mishra U.J."/>
            <person name="Smart R.P."/>
            <person name="Schroeder W."/>
            <person name="Powers R.A."/>
        </authorList>
    </citation>
    <scope>X-RAY CRYSTALLOGRAPHY (1.76 ANGSTROMS) OF 20-377 IN COMPLEXES WITH INHIBITORS</scope>
</reference>
<reference evidence="129 130 131" key="43">
    <citation type="journal article" date="2014" name="J. Am. Chem. Soc.">
        <title>Substrate deconstruction and the nonadditivity of enzyme recognition.</title>
        <authorList>
            <person name="Barelier S."/>
            <person name="Cummings J.A."/>
            <person name="Rauwerdink A.M."/>
            <person name="Hitchcock D.S."/>
            <person name="Farelli J.D."/>
            <person name="Almo S.C."/>
            <person name="Raushel F.M."/>
            <person name="Allen K.N."/>
            <person name="Shoichet B.K."/>
        </authorList>
    </citation>
    <scope>X-RAY CRYSTALLOGRAPHY (1.37 ANGSTROMS) OF 20-377 IN COMPLEXES WITH INHIBITORS</scope>
</reference>
<reference evidence="125 126 127 128" key="44">
    <citation type="journal article" date="2014" name="Nat. Chem. Biol.">
        <title>Covalent docking of large libraries for the discovery of chemical probes.</title>
        <authorList>
            <person name="London N."/>
            <person name="Miller R.M."/>
            <person name="Krishnan S."/>
            <person name="Uchida K."/>
            <person name="Irwin J.J."/>
            <person name="Eidam O."/>
            <person name="Gibold L."/>
            <person name="Cimermancic P."/>
            <person name="Bonnet R."/>
            <person name="Shoichet B.K."/>
            <person name="Taunton J."/>
        </authorList>
    </citation>
    <scope>X-RAY CRYSTALLOGRAPHY (1.42 ANGSTROMS) OF 20-377 IN COMPLEXES WITH INHIBITORS</scope>
</reference>
<reference evidence="132" key="45">
    <citation type="journal article" date="2016" name="Acta Crystallogr. D Struct. Biol.">
        <title>Structural basis for the extended substrate spectrum of AmpC BER and structure-guided discovery of the inhibition activity of citrate against the class C beta-lactamases AmpC BER and CMY-10.</title>
        <authorList>
            <person name="Na J.H."/>
            <person name="Cha S.S."/>
        </authorList>
    </citation>
    <scope>X-RAY CRYSTALLOGRAPHY (1.75 ANGSTROMS) OF 21-377 IN COMPLEX WITH CITRIC ACID</scope>
    <scope>ACTIVITY REGULATION</scope>
</reference>
<reference evidence="133 134 135 136" key="46">
    <citation type="journal article" date="2019" name="Nature">
        <title>Ultra-large library docking for discovering new chemotypes.</title>
        <authorList>
            <person name="Lyu J."/>
            <person name="Wang S."/>
            <person name="Balius T.E."/>
            <person name="Singh I."/>
            <person name="Levit A."/>
            <person name="Moroz Y.S."/>
            <person name="O'Meara M.J."/>
            <person name="Che T."/>
            <person name="Algaa E."/>
            <person name="Tolmachova K."/>
            <person name="Tolmachev A.A."/>
            <person name="Shoichet B.K."/>
            <person name="Roth B.L."/>
            <person name="Irwin J.J."/>
        </authorList>
    </citation>
    <scope>X-RAY CRYSTALLOGRAPHY (1.50 ANGSTROMS) OF 20-377 IN COMPLEXES WITH INHIBITORS</scope>
</reference>
<reference evidence="138 147 148 149" key="47">
    <citation type="journal article" date="2020" name="Biomolecules">
        <title>Bicyclic Boronates as Potent Inhibitors of AmpC, the Class C beta-Lactamase from Escherichia coli.</title>
        <authorList>
            <person name="Lang P.A."/>
            <person name="Parkova A."/>
            <person name="Leissing T.M."/>
            <person name="Calvopina K."/>
            <person name="Cain R."/>
            <person name="Krajnc A."/>
            <person name="Panduwawala T.D."/>
            <person name="Philippe J."/>
            <person name="Fishwick C.W.G."/>
            <person name="Trapencieris P."/>
            <person name="Page M.G.P."/>
            <person name="Schofield C.J."/>
            <person name="Brem J."/>
        </authorList>
    </citation>
    <scope>X-RAY CRYSTALLOGRAPHY (1.42 ANGSTROMS) OF 20-377 IN COMPLEXES WITH BORONATE INHIBITORS</scope>
    <scope>ACTIVITY REGULATION</scope>
</reference>
<reference evidence="143" key="48">
    <citation type="submission" date="2020-04" db="PDB data bank">
        <title>class C beta-lactamase from Escherichia coli in complex with Cephalothin.</title>
        <authorList>
            <person name="Chang C."/>
            <person name="Maltseva N."/>
            <person name="Endres M."/>
            <person name="Joachimiak A."/>
        </authorList>
    </citation>
    <scope>X-RAY CRYSTALLOGRAPHY (1.40 ANGSTROMS) OF 19-377 IN COMPLEX WITH SUBSTRATE</scope>
</reference>
<reference evidence="145" key="49">
    <citation type="submission" date="2020-06" db="PDB data bank">
        <title>Class C beta-lactamase from Escherichia coli in complex with Tazobactam.</title>
        <authorList>
            <person name="Chang C."/>
            <person name="Maltseva N."/>
            <person name="Endres M."/>
            <person name="Joachimiak A."/>
        </authorList>
    </citation>
    <scope>X-RAY CRYSTALLOGRAPHY (2.70 ANGSTROMS) OF 19-377 IN COMPLEX WITH INHIBITOR</scope>
</reference>
<reference evidence="146" key="50">
    <citation type="submission" date="2020-06" db="PDB data bank">
        <title>Class C beta-lactamase from Escherichia coli.</title>
        <authorList>
            <person name="Chang C."/>
            <person name="Maltseva N."/>
            <person name="Endres M."/>
            <person name="Joachimiak A."/>
        </authorList>
    </citation>
    <scope>X-RAY CRYSTALLOGRAPHY (1.22 ANGSTROMS) OF 19-377</scope>
</reference>
<reference evidence="144" key="51">
    <citation type="submission" date="2020-06" db="PDB data bank">
        <title>The crystal structure of a Beta-lactamase from Escherichia coli CFT073.</title>
        <authorList>
            <person name="Tan K."/>
            <person name="Wu R."/>
            <person name="Endres M."/>
            <person name="Joachimiak A."/>
        </authorList>
    </citation>
    <scope>X-RAY CRYSTALLOGRAPHY (1.90 ANGSTROMS) OF 20-377</scope>
</reference>
<reference evidence="139 140 141 142" key="52">
    <citation type="journal article" date="2021" name="Antimicrob. Agents Chemother.">
        <title>Structural Investigations of the Inhibition of Escherichia coli AmpC beta-Lactamase by Diazabicyclooctanes.</title>
        <authorList>
            <person name="Lang P.A."/>
            <person name="Leissing T.M."/>
            <person name="Page M.G.P."/>
            <person name="Schofield C.J."/>
            <person name="Brem J."/>
        </authorList>
    </citation>
    <scope>X-RAY CRYSTALLOGRAPHY (1.30 ANGSTROMS) OF 20-377 IN COMPLEXES WITH INHIBITORS</scope>
</reference>
<reference evidence="137" key="53">
    <citation type="journal article" date="2022" name="Proc. Natl. Acad. Sci. U.S.A.">
        <title>Studies on enmetazobactam clarify mechanisms of widely used beta-lactamase inhibitors.</title>
        <authorList>
            <person name="Lang P.A."/>
            <person name="Raj R."/>
            <person name="Tumber A."/>
            <person name="Lohans C.T."/>
            <person name="Rabe P."/>
            <person name="Robinson C.V."/>
            <person name="Brem J."/>
            <person name="Schofield C.J."/>
        </authorList>
    </citation>
    <scope>X-RAY CRYSTALLOGRAPHY (1.75 ANGSTROMS) OF 20-377 IN COMPLEX WITH INHIBITOR</scope>
    <scope>ACTIVITY REGULATION</scope>
    <scope>ACTIVE SITE</scope>
</reference>
<proteinExistence type="evidence at protein level"/>
<gene>
    <name evidence="29" type="primary">ampC</name>
    <name evidence="32" type="synonym">ampA</name>
    <name evidence="31" type="ordered locus">b4150</name>
    <name evidence="28" type="ordered locus">JW4111</name>
</gene>
<keyword id="KW-0002">3D-structure</keyword>
<keyword id="KW-0046">Antibiotic resistance</keyword>
<keyword id="KW-0903">Direct protein sequencing</keyword>
<keyword id="KW-0378">Hydrolase</keyword>
<keyword id="KW-0574">Periplasm</keyword>
<keyword id="KW-1185">Reference proteome</keyword>
<keyword id="KW-0732">Signal</keyword>
<accession>P00811</accession>
<accession>Q2M6F2</accession>
<feature type="signal peptide" evidence="23">
    <location>
        <begin position="1"/>
        <end position="19"/>
    </location>
</feature>
<feature type="chain" id="PRO_0000016958" description="Beta-lactamase">
    <location>
        <begin position="20"/>
        <end position="377"/>
    </location>
</feature>
<feature type="active site" description="Acyl-ester intermediate" evidence="1 4 5 9 22 23 25 26">
    <location>
        <position position="80"/>
    </location>
</feature>
<feature type="binding site" evidence="9 26 39 68">
    <location>
        <position position="80"/>
    </location>
    <ligand>
        <name>a beta-lactam</name>
        <dbReference type="ChEBI" id="CHEBI:35627"/>
    </ligand>
</feature>
<feature type="binding site" evidence="5 7 53 58">
    <location>
        <position position="136"/>
    </location>
    <ligand>
        <name>a beta-lactam</name>
        <dbReference type="ChEBI" id="CHEBI:35627"/>
    </ligand>
</feature>
<feature type="binding site" evidence="9 68">
    <location>
        <position position="166"/>
    </location>
    <ligand>
        <name>a beta-lactam</name>
        <dbReference type="ChEBI" id="CHEBI:35627"/>
    </ligand>
</feature>
<feature type="binding site" evidence="5 7 9 26 39 53 58 68">
    <location>
        <position position="168"/>
    </location>
    <ligand>
        <name>a beta-lactam</name>
        <dbReference type="ChEBI" id="CHEBI:35627"/>
    </ligand>
</feature>
<feature type="binding site" evidence="5 7 9 26 39 53 58 68">
    <location>
        <position position="334"/>
    </location>
    <ligand>
        <name>a beta-lactam</name>
        <dbReference type="ChEBI" id="CHEBI:35627"/>
    </ligand>
</feature>
<feature type="binding site" evidence="5 53">
    <location>
        <position position="359"/>
    </location>
    <ligand>
        <name>a beta-lactam</name>
        <dbReference type="ChEBI" id="CHEBI:35627"/>
    </ligand>
</feature>
<feature type="mutagenesis site" description="Loss of activity." evidence="6">
    <original>S</original>
    <variation>D</variation>
    <variation>E</variation>
    <variation>G</variation>
    <location>
        <position position="80"/>
    </location>
</feature>
<feature type="mutagenesis site" description="Lowers activity more than 1000-fold and increases protein stability." evidence="6">
    <original>K</original>
    <variation>Q</variation>
    <variation>T</variation>
    <location>
        <position position="83"/>
    </location>
</feature>
<feature type="mutagenesis site" description="Lowers activity more than 2000-fold." evidence="13">
    <original>K</original>
    <variation>R</variation>
    <location>
        <position position="83"/>
    </location>
</feature>
<feature type="mutagenesis site" description="Increases activity about 200-fold with respect to cefotaxime. Reduces activity about 8-fold with respect to cephalothin. Reduces thermodynamic stability." evidence="14">
    <original>T</original>
    <variation>I</variation>
    <location>
        <position position="86"/>
    </location>
</feature>
<feature type="mutagenesis site" description="Reduces binding affinity of inhibitor compound 3 about 4-fold." evidence="8">
    <original>L</original>
    <variation>A</variation>
    <location>
        <position position="135"/>
    </location>
</feature>
<feature type="mutagenesis site" description="Lowers activity more than 1000-fold." evidence="6">
    <original>Y</original>
    <variation>E</variation>
    <location>
        <position position="166"/>
    </location>
</feature>
<feature type="mutagenesis site" description="Lowers activity more than 6000-fold." evidence="3">
    <original>N</original>
    <variation>A</variation>
    <location>
        <position position="168"/>
    </location>
</feature>
<feature type="mutagenesis site" description="Lowers activity more than 1000-fold." evidence="6">
    <original>N</original>
    <variation>D</variation>
    <variation>H</variation>
    <location>
        <position position="168"/>
    </location>
</feature>
<feature type="mutagenesis site" description="Increases activity about 200-fold with respect to cefotaxime. Reduces activity about 3-fold with respect to cephalothin. Reduces thermodynamic stability." evidence="14">
    <original>H</original>
    <variation>HAAA</variation>
    <location>
        <position position="226"/>
    </location>
</feature>
<feature type="mutagenesis site" description="Increases activity about 150-fold with respect to cefotaxime. Reduces activity about 5-fold with respect to cephalothin. Reduces thermodynamic stability." evidence="14">
    <original>E</original>
    <variation>K</variation>
    <location>
        <position position="235"/>
    </location>
</feature>
<feature type="mutagenesis site" description="Increases activity about 180-fold with respect to cefotaxime. Reduces activity about 100-fold with respect to cephalothin. Reduces thermodynamic stability." evidence="14">
    <original>Y</original>
    <variation>G</variation>
    <location>
        <position position="237"/>
    </location>
</feature>
<feature type="mutagenesis site" description="Reduces binding affinity of inhibitor compound 1 about 17-fold." evidence="8">
    <original>N</original>
    <variation>A</variation>
    <location>
        <position position="305"/>
    </location>
</feature>
<feature type="mutagenesis site" description="Reduces binding affinity of inhibitor compound 3 about 30-fold." evidence="8">
    <original>L</original>
    <variation>A</variation>
    <location>
        <position position="309"/>
    </location>
</feature>
<feature type="mutagenesis site" description="Increases activity about 100-fold with respect to cefotaxime. Reduces activity about 5-fold with respect to cephalothin. Reduces thermodynamic stability." evidence="14">
    <original>V</original>
    <variation>E</variation>
    <location>
        <position position="314"/>
    </location>
</feature>
<feature type="mutagenesis site" description="Lowers activity more than 1000-fold." evidence="6">
    <original>K</original>
    <variation>A</variation>
    <location>
        <position position="331"/>
    </location>
</feature>
<feature type="helix" evidence="151">
    <location>
        <begin position="22"/>
        <end position="39"/>
    </location>
</feature>
<feature type="strand" evidence="151">
    <location>
        <begin position="42"/>
        <end position="50"/>
    </location>
</feature>
<feature type="strand" evidence="151">
    <location>
        <begin position="53"/>
        <end position="63"/>
    </location>
</feature>
<feature type="turn" evidence="151">
    <location>
        <begin position="64"/>
        <end position="67"/>
    </location>
</feature>
<feature type="strand" evidence="151">
    <location>
        <begin position="75"/>
        <end position="77"/>
    </location>
</feature>
<feature type="helix" evidence="151">
    <location>
        <begin position="79"/>
        <end position="81"/>
    </location>
</feature>
<feature type="helix" evidence="151">
    <location>
        <begin position="82"/>
        <end position="95"/>
    </location>
</feature>
<feature type="helix" evidence="151">
    <location>
        <begin position="105"/>
        <end position="108"/>
    </location>
</feature>
<feature type="helix" evidence="155">
    <location>
        <begin position="110"/>
        <end position="112"/>
    </location>
</feature>
<feature type="helix" evidence="151">
    <location>
        <begin position="115"/>
        <end position="117"/>
    </location>
</feature>
<feature type="helix" evidence="151">
    <location>
        <begin position="122"/>
        <end position="126"/>
    </location>
</feature>
<feature type="helix" evidence="151">
    <location>
        <begin position="144"/>
        <end position="153"/>
    </location>
</feature>
<feature type="strand" evidence="151">
    <location>
        <begin position="162"/>
        <end position="164"/>
    </location>
</feature>
<feature type="helix" evidence="151">
    <location>
        <begin position="168"/>
        <end position="178"/>
    </location>
</feature>
<feature type="turn" evidence="151">
    <location>
        <begin position="179"/>
        <end position="183"/>
    </location>
</feature>
<feature type="helix" evidence="151">
    <location>
        <begin position="186"/>
        <end position="193"/>
    </location>
</feature>
<feature type="turn" evidence="151">
    <location>
        <begin position="194"/>
        <end position="199"/>
    </location>
</feature>
<feature type="strand" evidence="151">
    <location>
        <begin position="204"/>
        <end position="206"/>
    </location>
</feature>
<feature type="helix" evidence="151">
    <location>
        <begin position="209"/>
        <end position="214"/>
    </location>
</feature>
<feature type="strand" evidence="151">
    <location>
        <begin position="218"/>
        <end position="220"/>
    </location>
</feature>
<feature type="strand" evidence="151">
    <location>
        <begin position="223"/>
        <end position="225"/>
    </location>
</feature>
<feature type="turn" evidence="153">
    <location>
        <begin position="229"/>
        <end position="231"/>
    </location>
</feature>
<feature type="helix" evidence="151">
    <location>
        <begin position="233"/>
        <end position="236"/>
    </location>
</feature>
<feature type="strand" evidence="154">
    <location>
        <begin position="240"/>
        <end position="242"/>
    </location>
</feature>
<feature type="helix" evidence="151">
    <location>
        <begin position="243"/>
        <end position="254"/>
    </location>
</feature>
<feature type="helix" evidence="151">
    <location>
        <begin position="256"/>
        <end position="258"/>
    </location>
</feature>
<feature type="helix" evidence="151">
    <location>
        <begin position="262"/>
        <end position="271"/>
    </location>
</feature>
<feature type="strand" evidence="151">
    <location>
        <begin position="273"/>
        <end position="278"/>
    </location>
</feature>
<feature type="strand" evidence="151">
    <location>
        <begin position="281"/>
        <end position="283"/>
    </location>
</feature>
<feature type="strand" evidence="151">
    <location>
        <begin position="288"/>
        <end position="293"/>
    </location>
</feature>
<feature type="helix" evidence="151">
    <location>
        <begin position="296"/>
        <end position="301"/>
    </location>
</feature>
<feature type="strand" evidence="152">
    <location>
        <begin position="303"/>
        <end position="305"/>
    </location>
</feature>
<feature type="strand" evidence="151">
    <location>
        <begin position="306"/>
        <end position="308"/>
    </location>
</feature>
<feature type="strand" evidence="150">
    <location>
        <begin position="310"/>
        <end position="313"/>
    </location>
</feature>
<feature type="strand" evidence="151">
    <location>
        <begin position="315"/>
        <end position="321"/>
    </location>
</feature>
<feature type="strand" evidence="151">
    <location>
        <begin position="325"/>
        <end position="335"/>
    </location>
</feature>
<feature type="strand" evidence="151">
    <location>
        <begin position="338"/>
        <end position="345"/>
    </location>
</feature>
<feature type="helix" evidence="151">
    <location>
        <begin position="346"/>
        <end position="348"/>
    </location>
</feature>
<feature type="strand" evidence="151">
    <location>
        <begin position="350"/>
        <end position="358"/>
    </location>
</feature>
<feature type="helix" evidence="151">
    <location>
        <begin position="362"/>
        <end position="376"/>
    </location>
</feature>
<comment type="function">
    <text evidence="7 11 14 16 19 20 21 24">Class C beta-lactamase which confers resistance to penicillins and cephalosporins (PubMed:12323371, PubMed:17956081, PubMed:23043117, PubMed:33199391, PubMed:6998377). Has benzylpenicillin- and cephaloridine-hydrolyzing activity (PubMed:3264154, PubMed:3264155, PubMed:6998377). Has weak cefuroxime, cefotaxime, cefoxitin and oxacillin-hydrolyzing activities (PubMed:19913034, PubMed:3264154, PubMed:3264155).</text>
</comment>
<comment type="catalytic activity">
    <reaction evidence="1 7 19 20 24">
        <text>a beta-lactam + H2O = a substituted beta-amino acid</text>
        <dbReference type="Rhea" id="RHEA:20401"/>
        <dbReference type="ChEBI" id="CHEBI:15377"/>
        <dbReference type="ChEBI" id="CHEBI:35627"/>
        <dbReference type="ChEBI" id="CHEBI:140347"/>
        <dbReference type="EC" id="3.5.2.6"/>
    </reaction>
</comment>
<comment type="activity regulation">
    <text evidence="2 10 12 15 16 17 18 21 22 24 25">Inhibited by the beta-lactamase-blocking agents avibactam, enmetazobactam, relebactam, nacubactam, vaborbactam, taniborbactam, zidebactam, and beta-lactam-analog boronic acids, via a covalent binding to Ser-80 (PubMed:17997318, PubMed:20945905, PubMed:23043117, PubMed:32545682, PubMed:33199391, PubMed:35486701, PubMed:9819201). Inhibited by non-beta-lactam, benzo(b)thiophene-2-boronic acid (BZBTH2B) and various cyclic boronates (PubMed:10595535, PubMed:32545682). Not inhibited by clavulanic acid (PubMed:6998377). Inhibited by O-aryloxycarbonyl hydroxamates, via cross-linking of the active site Ser-80 to Lys-331 (PubMed:17628063). Weakly inhibited by citric acid (PubMed:27487828).</text>
</comment>
<comment type="biophysicochemical properties">
    <kinetics>
        <KM evidence="19">4.4 uM for benzylpenicillin (at pH 8.2)</KM>
        <KM evidence="7">5 uM for benzylpenicillin (at pH 7.0)</KM>
        <KM evidence="19">3.5 uM for ampicillin (at pH 8.2)</KM>
        <KM evidence="20">500 uM for nitrocefin (at pH 8.2)</KM>
        <KM evidence="20">170 uM for cephaloridine (at pH 8.2)</KM>
        <KM evidence="20">400 uM for cefazolin (at pH 8.2)</KM>
        <KM evidence="20">42 uM for cefalotin (at pH 8.2)</KM>
        <KM evidence="7">31 uM for cefalotin (at pH 7.0)</KM>
        <KM evidence="20">4 uM for cephalexin (at pH 8.2)</KM>
        <KM evidence="7">0.8 uM for cefotaxime (at pH 7.0)</KM>
        <KM evidence="7">24 uM for loracarbef (at pH 7.0)</KM>
        <text evidence="7 13 19 20">kcat is 45 sec(-1) with benzylpenicillin as substrate (at pH 8.2) (PubMed:3264154). kcat is 133 sec(-1) with benzylpenicillin as substrate (at pH 7.0) (PubMed:12323371). kcat is 4.2 sec(-1) with ampicillin as substrate (at pH 8.2) (PubMed:3264154). kcat is 490 sec(-1) with nitrocefin as substrate (at pH 8.2) (PubMed:3264155). kcat is 130 sec(-1) with cephaloridine as substrate (at pH 8.2) (PubMed:3264155). kcat is 150 sec(-1) with cefazolin as substrate (at pH 8.2) (PubMed:3264155). kcat is 300 sec(-1) with cefalotin as substrate (at pH 8.2) (PubMed:3264155). kcat is 38 sec(-1) with cephalexin as substrate (at pH 8.2) (PubMed:3264155). kcat is 263 sec(-1) with cefalotin as substrate (at pH 7.0) (PubMed:12323371). kcat is 0.045 sec(-1) with cefotaxime as substrate (at pH 7.0) (PubMed:12323371). kcat is 118 sec(-1) with loracarbef as substrate (at pH 7.0) (PubMed:12323371). kcat is 275 sec(-1) with cefalotin as substrate (at pH 7.0).</text>
    </kinetics>
</comment>
<comment type="subunit">
    <text evidence="4">Monomer.</text>
</comment>
<comment type="subcellular location">
    <subcellularLocation>
        <location evidence="29">Periplasm</location>
    </subcellularLocation>
</comment>
<comment type="induction">
    <text evidence="2 27">Can be induced by beta-lactams (PubMed:10595535). Expression is not up-regulated by the non-beta-lactam inhibitor, benzo(b)thiophene-2-boronic acid (BZBTH2B) (PubMed:10595535).</text>
</comment>
<comment type="miscellaneous">
    <text evidence="33">The class C beta-lactamase family has a specific amino-acid numbering system known as SANC, for structural alignment-based numbering of class C beta-lactamases, or else the simpler name structural position. A multiple sequence alignment was used to derive a consensus sequence and then the consensus was numbered taking into account insertions and deletions. This allows use of identical numbers, e.g. for active site residues, despite differences in protein length. UniProt always uses natural numbering of residues, hence there appear to be differences in numbering between this entry and some papers.</text>
</comment>
<comment type="similarity">
    <text evidence="32">Belongs to the class-C beta-lactamase family.</text>
</comment>